<evidence type="ECO:0000250" key="1"/>
<evidence type="ECO:0000255" key="2"/>
<evidence type="ECO:0000255" key="3">
    <source>
        <dbReference type="PROSITE-ProRule" id="PRU00265"/>
    </source>
</evidence>
<evidence type="ECO:0000256" key="4">
    <source>
        <dbReference type="SAM" id="MobiDB-lite"/>
    </source>
</evidence>
<evidence type="ECO:0000269" key="5">
    <source>
    </source>
</evidence>
<evidence type="ECO:0000269" key="6">
    <source>
    </source>
</evidence>
<evidence type="ECO:0000269" key="7">
    <source>
    </source>
</evidence>
<evidence type="ECO:0000269" key="8">
    <source>
    </source>
</evidence>
<evidence type="ECO:0000269" key="9">
    <source>
    </source>
</evidence>
<evidence type="ECO:0000269" key="10">
    <source>
    </source>
</evidence>
<evidence type="ECO:0000269" key="11">
    <source>
    </source>
</evidence>
<evidence type="ECO:0000269" key="12">
    <source>
    </source>
</evidence>
<evidence type="ECO:0000269" key="13">
    <source>
    </source>
</evidence>
<evidence type="ECO:0000303" key="14">
    <source>
    </source>
</evidence>
<evidence type="ECO:0007744" key="15">
    <source>
    </source>
</evidence>
<reference key="1">
    <citation type="journal article" date="1989" name="Oncogene">
        <title>A human rel proto-oncogene cDNA containing an Alu fragment as a potential coding exon.</title>
        <authorList>
            <person name="Brownell E."/>
            <person name="Mittereder N."/>
            <person name="Rice N.R."/>
        </authorList>
    </citation>
    <scope>NUCLEOTIDE SEQUENCE [MRNA] (ISOFORM 1)</scope>
</reference>
<reference key="2">
    <citation type="submission" date="2005-12" db="EMBL/GenBank/DDBJ databases">
        <authorList>
            <consortium name="NHLBI resequencing and genotyping service (RS&amp;G)"/>
        </authorList>
    </citation>
    <scope>NUCLEOTIDE SEQUENCE [GENOMIC DNA]</scope>
</reference>
<reference key="3">
    <citation type="journal article" date="2005" name="Nature">
        <title>Generation and annotation of the DNA sequences of human chromosomes 2 and 4.</title>
        <authorList>
            <person name="Hillier L.W."/>
            <person name="Graves T.A."/>
            <person name="Fulton R.S."/>
            <person name="Fulton L.A."/>
            <person name="Pepin K.H."/>
            <person name="Minx P."/>
            <person name="Wagner-McPherson C."/>
            <person name="Layman D."/>
            <person name="Wylie K."/>
            <person name="Sekhon M."/>
            <person name="Becker M.C."/>
            <person name="Fewell G.A."/>
            <person name="Delehaunty K.D."/>
            <person name="Miner T.L."/>
            <person name="Nash W.E."/>
            <person name="Kremitzki C."/>
            <person name="Oddy L."/>
            <person name="Du H."/>
            <person name="Sun H."/>
            <person name="Bradshaw-Cordum H."/>
            <person name="Ali J."/>
            <person name="Carter J."/>
            <person name="Cordes M."/>
            <person name="Harris A."/>
            <person name="Isak A."/>
            <person name="van Brunt A."/>
            <person name="Nguyen C."/>
            <person name="Du F."/>
            <person name="Courtney L."/>
            <person name="Kalicki J."/>
            <person name="Ozersky P."/>
            <person name="Abbott S."/>
            <person name="Armstrong J."/>
            <person name="Belter E.A."/>
            <person name="Caruso L."/>
            <person name="Cedroni M."/>
            <person name="Cotton M."/>
            <person name="Davidson T."/>
            <person name="Desai A."/>
            <person name="Elliott G."/>
            <person name="Erb T."/>
            <person name="Fronick C."/>
            <person name="Gaige T."/>
            <person name="Haakenson W."/>
            <person name="Haglund K."/>
            <person name="Holmes A."/>
            <person name="Harkins R."/>
            <person name="Kim K."/>
            <person name="Kruchowski S.S."/>
            <person name="Strong C.M."/>
            <person name="Grewal N."/>
            <person name="Goyea E."/>
            <person name="Hou S."/>
            <person name="Levy A."/>
            <person name="Martinka S."/>
            <person name="Mead K."/>
            <person name="McLellan M.D."/>
            <person name="Meyer R."/>
            <person name="Randall-Maher J."/>
            <person name="Tomlinson C."/>
            <person name="Dauphin-Kohlberg S."/>
            <person name="Kozlowicz-Reilly A."/>
            <person name="Shah N."/>
            <person name="Swearengen-Shahid S."/>
            <person name="Snider J."/>
            <person name="Strong J.T."/>
            <person name="Thompson J."/>
            <person name="Yoakum M."/>
            <person name="Leonard S."/>
            <person name="Pearman C."/>
            <person name="Trani L."/>
            <person name="Radionenko M."/>
            <person name="Waligorski J.E."/>
            <person name="Wang C."/>
            <person name="Rock S.M."/>
            <person name="Tin-Wollam A.-M."/>
            <person name="Maupin R."/>
            <person name="Latreille P."/>
            <person name="Wendl M.C."/>
            <person name="Yang S.-P."/>
            <person name="Pohl C."/>
            <person name="Wallis J.W."/>
            <person name="Spieth J."/>
            <person name="Bieri T.A."/>
            <person name="Berkowicz N."/>
            <person name="Nelson J.O."/>
            <person name="Osborne J."/>
            <person name="Ding L."/>
            <person name="Meyer R."/>
            <person name="Sabo A."/>
            <person name="Shotland Y."/>
            <person name="Sinha P."/>
            <person name="Wohldmann P.E."/>
            <person name="Cook L.L."/>
            <person name="Hickenbotham M.T."/>
            <person name="Eldred J."/>
            <person name="Williams D."/>
            <person name="Jones T.A."/>
            <person name="She X."/>
            <person name="Ciccarelli F.D."/>
            <person name="Izaurralde E."/>
            <person name="Taylor J."/>
            <person name="Schmutz J."/>
            <person name="Myers R.M."/>
            <person name="Cox D.R."/>
            <person name="Huang X."/>
            <person name="McPherson J.D."/>
            <person name="Mardis E.R."/>
            <person name="Clifton S.W."/>
            <person name="Warren W.C."/>
            <person name="Chinwalla A.T."/>
            <person name="Eddy S.R."/>
            <person name="Marra M.A."/>
            <person name="Ovcharenko I."/>
            <person name="Furey T.S."/>
            <person name="Miller W."/>
            <person name="Eichler E.E."/>
            <person name="Bork P."/>
            <person name="Suyama M."/>
            <person name="Torrents D."/>
            <person name="Waterston R.H."/>
            <person name="Wilson R.K."/>
        </authorList>
    </citation>
    <scope>NUCLEOTIDE SEQUENCE [LARGE SCALE GENOMIC DNA]</scope>
</reference>
<reference key="4">
    <citation type="journal article" date="2004" name="Genome Res.">
        <title>The status, quality, and expansion of the NIH full-length cDNA project: the Mammalian Gene Collection (MGC).</title>
        <authorList>
            <consortium name="The MGC Project Team"/>
        </authorList>
    </citation>
    <scope>NUCLEOTIDE SEQUENCE [LARGE SCALE MRNA] (ISOFORM 2)</scope>
    <source>
        <tissue>Colon</tissue>
    </source>
</reference>
<reference key="5">
    <citation type="journal article" date="1985" name="Mol. Cell. Biol.">
        <title>Genetic characterization of human c-rel sequences.</title>
        <authorList>
            <person name="Brownell E."/>
            <person name="O'Brien S.J."/>
            <person name="Nash W.G."/>
            <person name="Rice N.R."/>
        </authorList>
    </citation>
    <scope>NUCLEOTIDE SEQUENCE [GENOMIC DNA] OF 180-284</scope>
</reference>
<reference key="6">
    <citation type="journal article" date="1992" name="EMBO J.">
        <title>A novel complex between the p65 subunit of NF-kappa B and c-Rel binds to a DNA element involved in the phorbol ester induction of the human urokinase gene.</title>
        <authorList>
            <person name="Hansen S.K."/>
            <person name="Nerlov C."/>
            <person name="Zabel U."/>
            <person name="Verde P."/>
            <person name="Johnsen M."/>
            <person name="Baeuerle P.A."/>
            <person name="Blasi F."/>
        </authorList>
    </citation>
    <scope>IDENTIFICATION IN THE NF-KAPPA-B P65-C-REL COMPLEX</scope>
</reference>
<reference key="7">
    <citation type="journal article" date="1994" name="Oncogene">
        <title>Activation of multiple NF-kappa B/Rel DNA-binding complexes by tumor necrosis factor.</title>
        <authorList>
            <person name="Beg A.A."/>
            <person name="Baldwin A.S. Jr."/>
        </authorList>
    </citation>
    <scope>IDENTIFICATION IN THE NF-KAPPA-B P50-C-REL COMPLEX</scope>
    <scope>IDENTIFICATION IN THE NF-KAPPA-B P52-C-REL COMPLEX</scope>
    <scope>IDENTIFICATION IN THE NF-KAPPA-B P65-C-REL COMPLEX</scope>
</reference>
<reference key="8">
    <citation type="journal article" date="1997" name="Cell Growth Differ.">
        <title>Regulation of intercellular adhesion molecule-1 gene by tumor necrosis factor-alpha is mediated by the nuclear factor-kappaB heterodimers p65/p65 and p65/c-Rel in the absence of p50.</title>
        <authorList>
            <person name="Aoudjit F."/>
            <person name="Brochu N."/>
            <person name="Belanger B."/>
            <person name="Stratowa C."/>
            <person name="Hiscott J."/>
            <person name="Audette M."/>
        </authorList>
    </citation>
    <scope>IDENTIFICATION IN THE NF-KAPPA-B P65-C-REL COMPLEX</scope>
</reference>
<reference key="9">
    <citation type="journal article" date="1997" name="Mol. Cell. Biol.">
        <title>A new member of the IkappaB protein family, IkappaB epsilon, inhibits RelA (p65)-mediated NF-kappaB transcription.</title>
        <authorList>
            <person name="Li Z."/>
            <person name="Nabel G.J."/>
        </authorList>
    </citation>
    <scope>INTERACTION WITH NFKBIE</scope>
</reference>
<reference key="10">
    <citation type="journal article" date="2000" name="J. Biol. Chem.">
        <title>Tumor necrosis factor-alpha activation of NF-kappa B requires the phosphorylation of Ser-471 in the transactivation domain of c-Rel.</title>
        <authorList>
            <person name="Martin A.G."/>
            <person name="Fresno M."/>
        </authorList>
    </citation>
    <scope>PHOSPHORYLATION AT SER-503</scope>
</reference>
<reference key="11">
    <citation type="journal article" date="2004" name="Infect. Immun.">
        <title>Leishmania major amastigotes induce p50/c-Rel NF-kappa B transcription factor in human macrophages: involvement in cytokine synthesis.</title>
        <authorList>
            <person name="Guizani-Tabbane L."/>
            <person name="Ben-Aissa K."/>
            <person name="Belghith M."/>
            <person name="Sassi A."/>
            <person name="Dellagi K."/>
        </authorList>
    </citation>
    <scope>IDENTIFICATION IN THE NF-KAPPA-B P50-C-REL COMPLEX</scope>
</reference>
<reference key="12">
    <citation type="journal article" date="2004" name="Mol. Cell. Biol.">
        <title>Inhibition of NF-kappaB activity by IkappaBbeta in association with kappaB-Ras.</title>
        <authorList>
            <person name="Chen Y."/>
            <person name="Vallee S."/>
            <person name="Wu J."/>
            <person name="Vu D."/>
            <person name="Sondek J."/>
            <person name="Ghosh G."/>
        </authorList>
    </citation>
    <scope>INTERACTION WITH NKIRAS1</scope>
</reference>
<reference key="13">
    <citation type="journal article" date="2012" name="Proc. Natl. Acad. Sci. U.S.A.">
        <title>N-terminal acetylome analyses and functional insights of the N-terminal acetyltransferase NatB.</title>
        <authorList>
            <person name="Van Damme P."/>
            <person name="Lasa M."/>
            <person name="Polevoda B."/>
            <person name="Gazquez C."/>
            <person name="Elosegui-Artola A."/>
            <person name="Kim D.S."/>
            <person name="De Juan-Pardo E."/>
            <person name="Demeyer K."/>
            <person name="Hole K."/>
            <person name="Larrea E."/>
            <person name="Timmerman E."/>
            <person name="Prieto J."/>
            <person name="Arnesen T."/>
            <person name="Sherman F."/>
            <person name="Gevaert K."/>
            <person name="Aldabe R."/>
        </authorList>
    </citation>
    <scope>ACETYLATION [LARGE SCALE ANALYSIS] AT ALA-2</scope>
    <scope>CLEAVAGE OF INITIATOR METHIONINE [LARGE SCALE ANALYSIS]</scope>
    <scope>IDENTIFICATION BY MASS SPECTROMETRY [LARGE SCALE ANALYSIS]</scope>
</reference>
<reference key="14">
    <citation type="journal article" date="2019" name="J. Allergy Clin. Immunol.">
        <title>Combined immunodeficiency in a patient with c-Rel deficiency.</title>
        <authorList>
            <person name="Beaussant-Cohen S."/>
            <person name="Jaber F."/>
            <person name="Massaad M.J."/>
            <person name="Weeks S."/>
            <person name="Jones J."/>
            <person name="Alosaimi M.F."/>
            <person name="Wallace J."/>
            <person name="Al-Herz W."/>
            <person name="Geha R.S."/>
            <person name="Chou J."/>
        </authorList>
    </citation>
    <scope>INVOLVEMENT IN IMD92</scope>
</reference>
<reference key="15">
    <citation type="journal article" date="2021" name="J. Clin. Invest.">
        <title>Inherited human c-Rel deficiency disrupts myeloid and lymphoid immunity to multiple infectious agents.</title>
        <authorList>
            <person name="Levy R."/>
            <person name="Langlais D."/>
            <person name="Beziat V."/>
            <person name="Rapaport F."/>
            <person name="Rao G."/>
            <person name="Lazarov T."/>
            <person name="Bourgey M."/>
            <person name="Zhou Y.J."/>
            <person name="Briand C."/>
            <person name="Moriya K."/>
            <person name="Ailal F."/>
            <person name="Avery D.T."/>
            <person name="Markle J."/>
            <person name="Lim A.I."/>
            <person name="Ogishi M."/>
            <person name="Yang R."/>
            <person name="Pelham S."/>
            <person name="Emam M."/>
            <person name="Migaud M."/>
            <person name="Deswarte C."/>
            <person name="Habib T."/>
            <person name="Saraiva L.R."/>
            <person name="Moussa E.A."/>
            <person name="Guennoun A."/>
            <person name="Boisson B."/>
            <person name="Belkaya S."/>
            <person name="Martinez-Barricarte R."/>
            <person name="Rosain J."/>
            <person name="Belkadi A."/>
            <person name="Breton S."/>
            <person name="Payne K."/>
            <person name="Benhsaien I."/>
            <person name="Plebani A."/>
            <person name="Lougaris V."/>
            <person name="Di Santo J.P."/>
            <person name="Neven B."/>
            <person name="Abel L."/>
            <person name="Ma C.S."/>
            <person name="Bousfiha A.A."/>
            <person name="Marr N."/>
            <person name="Bustamante J."/>
            <person name="Liu K."/>
            <person name="Gros P."/>
            <person name="Geissmann F."/>
            <person name="Tangye S.G."/>
            <person name="Casanova J.L."/>
            <person name="Puel A."/>
        </authorList>
    </citation>
    <scope>INVOLVEMENT IN IMD92</scope>
</reference>
<comment type="function">
    <text>Proto-oncogene that may play a role in differentiation and lymphopoiesis. NF-kappa-B is a pleiotropic transcription factor which is present in almost all cell types and is involved in many biological processed such as inflammation, immunity, differentiation, cell growth, tumorigenesis and apoptosis. NF-kappa-B is a homo- or heterodimeric complex formed by the Rel-like domain-containing proteins RELA/p65, RELB, NFKB1/p105, NFKB1/p50, REL and NFKB2/p52. The dimers bind at kappa-B sites in the DNA of their target genes and the individual dimers have distinct preferences for different kappa-B sites that they can bind with distinguishable affinity and specificity. Different dimer combinations act as transcriptional activators or repressors, respectively. NF-kappa-B is controlled by various mechanisms of post-translational modification and subcellular compartmentalization as well as by interactions with other cofactors or corepressors. NF-kappa-B complexes are held in the cytoplasm in an inactive state complexed with members of the NF-kappa-B inhibitor (I-kappa-B) family. In a conventional activation pathway, I-kappa-B is phosphorylated by I-kappa-B kinases (IKKs) in response to different activators, subsequently degraded thus liberating the active NF-kappa-B complex which translocates to the nucleus. The NF-kappa-B heterodimer RELA/p65-c-Rel is a transcriptional activator.</text>
</comment>
<comment type="subunit">
    <text evidence="1 6 7 8 11 12 13">Component of the NF-kappa-B p65-c-Rel complex. Component of the NF-kappa-B p50-c-Rel complex. Component of the NF-kappa-B p52-c-Rel complex. Homodimer; component of the NF-kappa-B c-Rel-c-Rel complex (By similarity). Interacts with NKIRAS1. Interacts with NFKBIB (By similarity). Interacts with NFKBIE.</text>
</comment>
<comment type="interaction">
    <interactant intactId="EBI-307352">
        <id>Q04864</id>
    </interactant>
    <interactant intactId="EBI-2809489">
        <id>Q9NQ94</id>
        <label>A1CF</label>
    </interactant>
    <organismsDiffer>false</organismsDiffer>
    <experiments>3</experiments>
</comment>
<comment type="interaction">
    <interactant intactId="EBI-307352">
        <id>Q04864</id>
    </interactant>
    <interactant intactId="EBI-1237371">
        <id>O14734</id>
        <label>ACOT8</label>
    </interactant>
    <organismsDiffer>false</organismsDiffer>
    <experiments>3</experiments>
</comment>
<comment type="interaction">
    <interactant intactId="EBI-307352">
        <id>Q04864</id>
    </interactant>
    <interactant intactId="EBI-1754287">
        <id>Q9NRZ5</id>
        <label>AGPAT4</label>
    </interactant>
    <organismsDiffer>false</organismsDiffer>
    <experiments>3</experiments>
</comment>
<comment type="interaction">
    <interactant intactId="EBI-307352">
        <id>Q04864</id>
    </interactant>
    <interactant intactId="EBI-8643161">
        <id>Q9NX04</id>
        <label>AIRIM</label>
    </interactant>
    <organismsDiffer>false</organismsDiffer>
    <experiments>3</experiments>
</comment>
<comment type="interaction">
    <interactant intactId="EBI-307352">
        <id>Q04864</id>
    </interactant>
    <interactant intactId="EBI-79934">
        <id>P09917</id>
        <label>ALOX5</label>
    </interactant>
    <organismsDiffer>false</organismsDiffer>
    <experiments>3</experiments>
</comment>
<comment type="interaction">
    <interactant intactId="EBI-307352">
        <id>Q04864</id>
    </interactant>
    <interactant intactId="EBI-711158">
        <id>O95376</id>
        <label>ARIH2</label>
    </interactant>
    <organismsDiffer>false</organismsDiffer>
    <experiments>3</experiments>
</comment>
<comment type="interaction">
    <interactant intactId="EBI-307352">
        <id>Q04864</id>
    </interactant>
    <interactant intactId="EBI-2609717">
        <id>Q8TDY4</id>
        <label>ASAP3</label>
    </interactant>
    <organismsDiffer>false</organismsDiffer>
    <experiments>3</experiments>
</comment>
<comment type="interaction">
    <interactant intactId="EBI-307352">
        <id>Q04864</id>
    </interactant>
    <interactant intactId="EBI-727146">
        <id>Q7Z3C6</id>
        <label>ATG9A</label>
    </interactant>
    <organismsDiffer>false</organismsDiffer>
    <experiments>3</experiments>
</comment>
<comment type="interaction">
    <interactant intactId="EBI-307352">
        <id>Q04864</id>
    </interactant>
    <interactant intactId="EBI-1166928">
        <id>Q8N5M1</id>
        <label>ATPAF2</label>
    </interactant>
    <organismsDiffer>false</organismsDiffer>
    <experiments>3</experiments>
</comment>
<comment type="interaction">
    <interactant intactId="EBI-307352">
        <id>Q04864</id>
    </interactant>
    <interactant intactId="EBI-930964">
        <id>P54253</id>
        <label>ATXN1</label>
    </interactant>
    <organismsDiffer>false</organismsDiffer>
    <experiments>3</experiments>
</comment>
<comment type="interaction">
    <interactant intactId="EBI-307352">
        <id>Q04864</id>
    </interactant>
    <interactant intactId="EBI-10316571">
        <id>Q9NY43</id>
        <label>BARHL2</label>
    </interactant>
    <organismsDiffer>false</organismsDiffer>
    <experiments>3</experiments>
</comment>
<comment type="interaction">
    <interactant intactId="EBI-307352">
        <id>Q04864</id>
    </interactant>
    <interactant intactId="EBI-519672">
        <id>P55957</id>
        <label>BID</label>
    </interactant>
    <organismsDiffer>false</organismsDiffer>
    <experiments>3</experiments>
</comment>
<comment type="interaction">
    <interactant intactId="EBI-307352">
        <id>Q04864</id>
    </interactant>
    <interactant intactId="EBI-10215147">
        <id>P55957-2</id>
        <label>BID</label>
    </interactant>
    <organismsDiffer>false</organismsDiffer>
    <experiments>3</experiments>
</comment>
<comment type="interaction">
    <interactant intactId="EBI-307352">
        <id>Q04864</id>
    </interactant>
    <interactant intactId="EBI-3919268">
        <id>Q96LC9</id>
        <label>BMF</label>
    </interactant>
    <organismsDiffer>false</organismsDiffer>
    <experiments>3</experiments>
</comment>
<comment type="interaction">
    <interactant intactId="EBI-307352">
        <id>Q04864</id>
    </interactant>
    <interactant intactId="EBI-721765">
        <id>Q9H3H3</id>
        <label>C11orf68</label>
    </interactant>
    <organismsDiffer>false</organismsDiffer>
    <experiments>3</experiments>
</comment>
<comment type="interaction">
    <interactant intactId="EBI-307352">
        <id>Q04864</id>
    </interactant>
    <interactant intactId="EBI-2961725">
        <id>Q96LT7</id>
        <label>C9orf72</label>
    </interactant>
    <organismsDiffer>false</organismsDiffer>
    <experiments>3</experiments>
</comment>
<comment type="interaction">
    <interactant intactId="EBI-307352">
        <id>Q04864</id>
    </interactant>
    <interactant intactId="EBI-10311131">
        <id>Q9NP86</id>
        <label>CABP5</label>
    </interactant>
    <organismsDiffer>false</organismsDiffer>
    <experiments>3</experiments>
</comment>
<comment type="interaction">
    <interactant intactId="EBI-307352">
        <id>Q04864</id>
    </interactant>
    <interactant intactId="EBI-21668062">
        <id>Q8IV13</id>
        <label>CCNJL</label>
    </interactant>
    <organismsDiffer>false</organismsDiffer>
    <experiments>3</experiments>
</comment>
<comment type="interaction">
    <interactant intactId="EBI-307352">
        <id>Q04864</id>
    </interactant>
    <interactant intactId="EBI-711290">
        <id>P42773</id>
        <label>CDKN2C</label>
    </interactant>
    <organismsDiffer>false</organismsDiffer>
    <experiments>4</experiments>
</comment>
<comment type="interaction">
    <interactant intactId="EBI-307352">
        <id>Q04864</id>
    </interactant>
    <interactant intactId="EBI-5529694">
        <id>A8MT69</id>
        <label>CENPX</label>
    </interactant>
    <organismsDiffer>false</organismsDiffer>
    <experiments>3</experiments>
</comment>
<comment type="interaction">
    <interactant intactId="EBI-307352">
        <id>Q04864</id>
    </interactant>
    <interactant intactId="EBI-741885">
        <id>Q96LK0</id>
        <label>CEP19</label>
    </interactant>
    <organismsDiffer>false</organismsDiffer>
    <experiments>3</experiments>
</comment>
<comment type="interaction">
    <interactant intactId="EBI-307352">
        <id>Q04864</id>
    </interactant>
    <interactant intactId="EBI-723153">
        <id>Q9UFW8</id>
        <label>CGGBP1</label>
    </interactant>
    <organismsDiffer>false</organismsDiffer>
    <experiments>4</experiments>
</comment>
<comment type="interaction">
    <interactant intactId="EBI-307352">
        <id>Q04864</id>
    </interactant>
    <interactant intactId="EBI-1020839">
        <id>Q13111</id>
        <label>CHAF1A</label>
    </interactant>
    <organismsDiffer>false</organismsDiffer>
    <experiments>3</experiments>
</comment>
<comment type="interaction">
    <interactant intactId="EBI-307352">
        <id>Q04864</id>
    </interactant>
    <interactant intactId="EBI-2321769">
        <id>Q9Y6H1</id>
        <label>CHCHD2</label>
    </interactant>
    <organismsDiffer>false</organismsDiffer>
    <experiments>3</experiments>
</comment>
<comment type="interaction">
    <interactant intactId="EBI-307352">
        <id>Q04864</id>
    </interactant>
    <interactant intactId="EBI-10292696">
        <id>Q96Q77</id>
        <label>CIB3</label>
    </interactant>
    <organismsDiffer>false</organismsDiffer>
    <experiments>3</experiments>
</comment>
<comment type="interaction">
    <interactant intactId="EBI-307352">
        <id>Q04864</id>
    </interactant>
    <interactant intactId="EBI-739784">
        <id>Q9BW66</id>
        <label>CINP</label>
    </interactant>
    <organismsDiffer>false</organismsDiffer>
    <experiments>3</experiments>
</comment>
<comment type="interaction">
    <interactant intactId="EBI-307352">
        <id>Q04864</id>
    </interactant>
    <interactant intactId="EBI-456371">
        <id>P61024</id>
        <label>CKS1B</label>
    </interactant>
    <organismsDiffer>false</organismsDiffer>
    <experiments>3</experiments>
</comment>
<comment type="interaction">
    <interactant intactId="EBI-307352">
        <id>Q04864</id>
    </interactant>
    <interactant intactId="EBI-10318410">
        <id>Q9P218-2</id>
        <label>COL20A1</label>
    </interactant>
    <organismsDiffer>false</organismsDiffer>
    <experiments>3</experiments>
</comment>
<comment type="interaction">
    <interactant intactId="EBI-307352">
        <id>Q04864</id>
    </interactant>
    <interactant intactId="EBI-747133">
        <id>P27658</id>
        <label>COL8A1</label>
    </interactant>
    <organismsDiffer>false</organismsDiffer>
    <experiments>3</experiments>
</comment>
<comment type="interaction">
    <interactant intactId="EBI-307352">
        <id>Q04864</id>
    </interactant>
    <interactant intactId="EBI-1550112">
        <id>Q8N668</id>
        <label>COMMD1</label>
    </interactant>
    <organismsDiffer>false</organismsDiffer>
    <experiments>3</experiments>
</comment>
<comment type="interaction">
    <interactant intactId="EBI-307352">
        <id>Q04864</id>
    </interactant>
    <interactant intactId="EBI-7097057">
        <id>Q96FN4</id>
        <label>CPNE2</label>
    </interactant>
    <organismsDiffer>false</organismsDiffer>
    <experiments>3</experiments>
</comment>
<comment type="interaction">
    <interactant intactId="EBI-307352">
        <id>Q04864</id>
    </interactant>
    <interactant intactId="EBI-347859">
        <id>Q10570</id>
        <label>CPSF1</label>
    </interactant>
    <organismsDiffer>false</organismsDiffer>
    <experiments>3</experiments>
</comment>
<comment type="interaction">
    <interactant intactId="EBI-307352">
        <id>Q04864</id>
    </interactant>
    <interactant intactId="EBI-747082">
        <id>Q9NSA3</id>
        <label>CTNNBIP1</label>
    </interactant>
    <organismsDiffer>false</organismsDiffer>
    <experiments>3</experiments>
</comment>
<comment type="interaction">
    <interactant intactId="EBI-307352">
        <id>Q04864</id>
    </interactant>
    <interactant intactId="EBI-741925">
        <id>P49366</id>
        <label>DHPS</label>
    </interactant>
    <organismsDiffer>false</organismsDiffer>
    <experiments>3</experiments>
</comment>
<comment type="interaction">
    <interactant intactId="EBI-307352">
        <id>Q04864</id>
    </interactant>
    <interactant intactId="EBI-9679045">
        <id>Q9NQL9</id>
        <label>DMRT3</label>
    </interactant>
    <organismsDiffer>false</organismsDiffer>
    <experiments>3</experiments>
</comment>
<comment type="interaction">
    <interactant intactId="EBI-307352">
        <id>Q04864</id>
    </interactant>
    <interactant intactId="EBI-1220259">
        <id>P04053</id>
        <label>DNTT</label>
    </interactant>
    <organismsDiffer>false</organismsDiffer>
    <experiments>3</experiments>
</comment>
<comment type="interaction">
    <interactant intactId="EBI-307352">
        <id>Q04864</id>
    </interactant>
    <interactant intactId="EBI-2556107">
        <id>Q9Y6G9</id>
        <label>DYNC1LI1</label>
    </interactant>
    <organismsDiffer>false</organismsDiffer>
    <experiments>4</experiments>
</comment>
<comment type="interaction">
    <interactant intactId="EBI-307352">
        <id>Q04864</id>
    </interactant>
    <interactant intactId="EBI-743105">
        <id>Q5JVL4</id>
        <label>EFHC1</label>
    </interactant>
    <organismsDiffer>false</organismsDiffer>
    <experiments>7</experiments>
</comment>
<comment type="interaction">
    <interactant intactId="EBI-307352">
        <id>Q04864</id>
    </interactant>
    <interactant intactId="EBI-1175354">
        <id>Q9H6Z9</id>
        <label>EGLN3</label>
    </interactant>
    <organismsDiffer>false</organismsDiffer>
    <experiments>4</experiments>
</comment>
<comment type="interaction">
    <interactant intactId="EBI-307352">
        <id>Q04864</id>
    </interactant>
    <interactant intactId="EBI-366617">
        <id>Q14152</id>
        <label>EIF3A</label>
    </interactant>
    <organismsDiffer>false</organismsDiffer>
    <experiments>3</experiments>
</comment>
<comment type="interaction">
    <interactant intactId="EBI-307352">
        <id>Q04864</id>
    </interactant>
    <interactant intactId="EBI-353818">
        <id>O15371</id>
        <label>EIF3D</label>
    </interactant>
    <organismsDiffer>false</organismsDiffer>
    <experiments>3</experiments>
</comment>
<comment type="interaction">
    <interactant intactId="EBI-307352">
        <id>Q04864</id>
    </interactant>
    <interactant intactId="EBI-398610">
        <id>O60573</id>
        <label>EIF4E2</label>
    </interactant>
    <organismsDiffer>false</organismsDiffer>
    <experiments>3</experiments>
</comment>
<comment type="interaction">
    <interactant intactId="EBI-307352">
        <id>Q04864</id>
    </interactant>
    <interactant intactId="EBI-74090">
        <id>Q13541</id>
        <label>EIF4EBP1</label>
    </interactant>
    <organismsDiffer>false</organismsDiffer>
    <experiments>3</experiments>
</comment>
<comment type="interaction">
    <interactant intactId="EBI-307352">
        <id>Q04864</id>
    </interactant>
    <interactant intactId="EBI-373150">
        <id>P63241</id>
        <label>EIF5A</label>
    </interactant>
    <organismsDiffer>false</organismsDiffer>
    <experiments>3</experiments>
</comment>
<comment type="interaction">
    <interactant intactId="EBI-307352">
        <id>Q04864</id>
    </interactant>
    <interactant intactId="EBI-748028">
        <id>Q9GZV4</id>
        <label>EIF5A2</label>
    </interactant>
    <organismsDiffer>false</organismsDiffer>
    <experiments>3</experiments>
</comment>
<comment type="interaction">
    <interactant intactId="EBI-307352">
        <id>Q04864</id>
    </interactant>
    <interactant intactId="EBI-1054588">
        <id>O95834</id>
        <label>EML2</label>
    </interactant>
    <organismsDiffer>false</organismsDiffer>
    <experiments>3</experiments>
</comment>
<comment type="interaction">
    <interactant intactId="EBI-307352">
        <id>Q04864</id>
    </interactant>
    <interactant intactId="EBI-10182490">
        <id>O15197-2</id>
        <label>EPHB6</label>
    </interactant>
    <organismsDiffer>false</organismsDiffer>
    <experiments>3</experiments>
</comment>
<comment type="interaction">
    <interactant intactId="EBI-307352">
        <id>Q04864</id>
    </interactant>
    <interactant intactId="EBI-6255981">
        <id>Q7L775</id>
        <label>EPM2AIP1</label>
    </interactant>
    <organismsDiffer>false</organismsDiffer>
    <experiments>3</experiments>
</comment>
<comment type="interaction">
    <interactant intactId="EBI-307352">
        <id>Q04864</id>
    </interactant>
    <interactant intactId="EBI-371892">
        <id>Q9Y3B2</id>
        <label>EXOSC1</label>
    </interactant>
    <organismsDiffer>false</organismsDiffer>
    <experiments>4</experiments>
</comment>
<comment type="interaction">
    <interactant intactId="EBI-307352">
        <id>Q04864</id>
    </interactant>
    <interactant intactId="EBI-371876">
        <id>Q9NQT4</id>
        <label>EXOSC5</label>
    </interactant>
    <organismsDiffer>false</organismsDiffer>
    <experiments>3</experiments>
</comment>
<comment type="interaction">
    <interactant intactId="EBI-307352">
        <id>Q04864</id>
    </interactant>
    <interactant intactId="EBI-371922">
        <id>Q96B26</id>
        <label>EXOSC8</label>
    </interactant>
    <organismsDiffer>false</organismsDiffer>
    <experiments>3</experiments>
</comment>
<comment type="interaction">
    <interactant intactId="EBI-307352">
        <id>Q04864</id>
    </interactant>
    <interactant intactId="EBI-701903">
        <id>Q14192</id>
        <label>FHL2</label>
    </interactant>
    <organismsDiffer>false</organismsDiffer>
    <experiments>3</experiments>
</comment>
<comment type="interaction">
    <interactant intactId="EBI-307352">
        <id>Q04864</id>
    </interactant>
    <interactant intactId="EBI-6693977">
        <id>P68106</id>
        <label>FKBP1B</label>
    </interactant>
    <organismsDiffer>false</organismsDiffer>
    <experiments>3</experiments>
</comment>
<comment type="interaction">
    <interactant intactId="EBI-307352">
        <id>Q04864</id>
    </interactant>
    <interactant intactId="EBI-742815">
        <id>Q8NFF5</id>
        <label>FLAD1</label>
    </interactant>
    <organismsDiffer>false</organismsDiffer>
    <experiments>3</experiments>
</comment>
<comment type="interaction">
    <interactant intactId="EBI-307352">
        <id>Q04864</id>
    </interactant>
    <interactant intactId="EBI-9641086">
        <id>P21333-2</id>
        <label>FLNA</label>
    </interactant>
    <organismsDiffer>false</organismsDiffer>
    <experiments>3</experiments>
</comment>
<comment type="interaction">
    <interactant intactId="EBI-307352">
        <id>Q04864</id>
    </interactant>
    <interactant intactId="EBI-744935">
        <id>Q9BVV2</id>
        <label>FNDC11</label>
    </interactant>
    <organismsDiffer>false</organismsDiffer>
    <experiments>3</experiments>
</comment>
<comment type="interaction">
    <interactant intactId="EBI-307352">
        <id>Q04864</id>
    </interactant>
    <interactant intactId="EBI-4481939">
        <id>P98177</id>
        <label>FOXO4</label>
    </interactant>
    <organismsDiffer>false</organismsDiffer>
    <experiments>3</experiments>
</comment>
<comment type="interaction">
    <interactant intactId="EBI-307352">
        <id>Q04864</id>
    </interactant>
    <interactant intactId="EBI-2907712">
        <id>Q495W5</id>
        <label>FUT11</label>
    </interactant>
    <organismsDiffer>false</organismsDiffer>
    <experiments>3</experiments>
</comment>
<comment type="interaction">
    <interactant intactId="EBI-307352">
        <id>Q04864</id>
    </interactant>
    <interactant intactId="EBI-448202">
        <id>O95257</id>
        <label>GADD45G</label>
    </interactant>
    <organismsDiffer>false</organismsDiffer>
    <experiments>4</experiments>
</comment>
<comment type="interaction">
    <interactant intactId="EBI-307352">
        <id>Q04864</id>
    </interactant>
    <interactant intactId="EBI-748515">
        <id>Q8IVS8</id>
        <label>GLYCTK</label>
    </interactant>
    <organismsDiffer>false</organismsDiffer>
    <experiments>3</experiments>
</comment>
<comment type="interaction">
    <interactant intactId="EBI-307352">
        <id>Q04864</id>
    </interactant>
    <interactant intactId="EBI-401755">
        <id>P62993</id>
        <label>GRB2</label>
    </interactant>
    <organismsDiffer>false</organismsDiffer>
    <experiments>3</experiments>
</comment>
<comment type="interaction">
    <interactant intactId="EBI-307352">
        <id>Q04864</id>
    </interactant>
    <interactant intactId="EBI-2339359">
        <id>O14929</id>
        <label>HAT1</label>
    </interactant>
    <organismsDiffer>false</organismsDiffer>
    <experiments>3</experiments>
</comment>
<comment type="interaction">
    <interactant intactId="EBI-307352">
        <id>Q04864</id>
    </interactant>
    <interactant intactId="EBI-10276431">
        <id>Q8WUI4-5</id>
        <label>HDAC7</label>
    </interactant>
    <organismsDiffer>false</organismsDiffer>
    <experiments>3</experiments>
</comment>
<comment type="interaction">
    <interactant intactId="EBI-307352">
        <id>Q04864</id>
    </interactant>
    <interactant intactId="EBI-473886">
        <id>O00291</id>
        <label>HIP1</label>
    </interactant>
    <organismsDiffer>false</organismsDiffer>
    <experiments>3</experiments>
</comment>
<comment type="interaction">
    <interactant intactId="EBI-307352">
        <id>Q04864</id>
    </interactant>
    <interactant intactId="EBI-10194851">
        <id>P06340</id>
        <label>HLA-DOA</label>
    </interactant>
    <organismsDiffer>false</organismsDiffer>
    <experiments>3</experiments>
</comment>
<comment type="interaction">
    <interactant intactId="EBI-307352">
        <id>Q04864</id>
    </interactant>
    <interactant intactId="EBI-739361">
        <id>Q9UBY9</id>
        <label>HSPB7</label>
    </interactant>
    <organismsDiffer>false</organismsDiffer>
    <experiments>3</experiments>
</comment>
<comment type="interaction">
    <interactant intactId="EBI-307352">
        <id>Q04864</id>
    </interactant>
    <interactant intactId="EBI-465156">
        <id>Q9UBH0</id>
        <label>IL36RN</label>
    </interactant>
    <organismsDiffer>false</organismsDiffer>
    <experiments>3</experiments>
</comment>
<comment type="interaction">
    <interactant intactId="EBI-307352">
        <id>Q04864</id>
    </interactant>
    <interactant intactId="EBI-10226057">
        <id>Q08E86</id>
        <label>KIAA0100</label>
    </interactant>
    <organismsDiffer>false</organismsDiffer>
    <experiments>3</experiments>
</comment>
<comment type="interaction">
    <interactant intactId="EBI-307352">
        <id>Q04864</id>
    </interactant>
    <interactant intactId="EBI-10247181">
        <id>Q5THT1</id>
        <label>KLHL32</label>
    </interactant>
    <organismsDiffer>false</organismsDiffer>
    <experiments>3</experiments>
</comment>
<comment type="interaction">
    <interactant intactId="EBI-307352">
        <id>Q04864</id>
    </interactant>
    <interactant intactId="EBI-10185730">
        <id>Q9BYQ2</id>
        <label>KRTAP9-4</label>
    </interactant>
    <organismsDiffer>false</organismsDiffer>
    <experiments>3</experiments>
</comment>
<comment type="interaction">
    <interactant intactId="EBI-307352">
        <id>Q04864</id>
    </interactant>
    <interactant intactId="EBI-742828">
        <id>Q14847</id>
        <label>LASP1</label>
    </interactant>
    <organismsDiffer>false</organismsDiffer>
    <experiments>3</experiments>
</comment>
<comment type="interaction">
    <interactant intactId="EBI-307352">
        <id>Q04864</id>
    </interactant>
    <interactant intactId="EBI-10274069">
        <id>Q8TCE9</id>
        <label>LGALS14</label>
    </interactant>
    <organismsDiffer>false</organismsDiffer>
    <experiments>4</experiments>
</comment>
<comment type="interaction">
    <interactant intactId="EBI-307352">
        <id>Q04864</id>
    </interactant>
    <interactant intactId="EBI-8639312">
        <id>P25800</id>
        <label>LMO1</label>
    </interactant>
    <organismsDiffer>false</organismsDiffer>
    <experiments>3</experiments>
</comment>
<comment type="interaction">
    <interactant intactId="EBI-307352">
        <id>Q04864</id>
    </interactant>
    <interactant intactId="EBI-739696">
        <id>P25791</id>
        <label>LMO2</label>
    </interactant>
    <organismsDiffer>false</organismsDiffer>
    <experiments>3</experiments>
</comment>
<comment type="interaction">
    <interactant intactId="EBI-307352">
        <id>Q04864</id>
    </interactant>
    <interactant intactId="EBI-2805360">
        <id>Q9UIQ6</id>
        <label>LNPEP</label>
    </interactant>
    <organismsDiffer>false</organismsDiffer>
    <experiments>3</experiments>
</comment>
<comment type="interaction">
    <interactant intactId="EBI-307352">
        <id>Q04864</id>
    </interactant>
    <interactant intactId="EBI-347416">
        <id>Q9Y333</id>
        <label>LSM2</label>
    </interactant>
    <organismsDiffer>false</organismsDiffer>
    <experiments>3</experiments>
</comment>
<comment type="interaction">
    <interactant intactId="EBI-307352">
        <id>Q04864</id>
    </interactant>
    <interactant intactId="EBI-77889">
        <id>Q9UI95</id>
        <label>MAD2L2</label>
    </interactant>
    <organismsDiffer>false</organismsDiffer>
    <experiments>3</experiments>
</comment>
<comment type="interaction">
    <interactant intactId="EBI-307352">
        <id>Q04864</id>
    </interactant>
    <interactant intactId="EBI-746778">
        <id>Q96A72</id>
        <label>MAGOHB</label>
    </interactant>
    <organismsDiffer>false</organismsDiffer>
    <experiments>3</experiments>
</comment>
<comment type="interaction">
    <interactant intactId="EBI-307352">
        <id>Q04864</id>
    </interactant>
    <interactant intactId="EBI-10215880">
        <id>P57077-4</id>
        <label>MAP3K7CL</label>
    </interactant>
    <organismsDiffer>false</organismsDiffer>
    <experiments>3</experiments>
</comment>
<comment type="interaction">
    <interactant intactId="EBI-307352">
        <id>Q04864</id>
    </interactant>
    <interactant intactId="EBI-1104564">
        <id>Q9Y316</id>
        <label>MEMO1</label>
    </interactant>
    <organismsDiffer>false</organismsDiffer>
    <experiments>3</experiments>
</comment>
<comment type="interaction">
    <interactant intactId="EBI-307352">
        <id>Q04864</id>
    </interactant>
    <interactant intactId="EBI-6137472">
        <id>Q9BRT3</id>
        <label>MIEN1</label>
    </interactant>
    <organismsDiffer>false</organismsDiffer>
    <experiments>3</experiments>
</comment>
<comment type="interaction">
    <interactant intactId="EBI-307352">
        <id>Q04864</id>
    </interactant>
    <interactant intactId="EBI-399246">
        <id>Q9UBU8</id>
        <label>MORF4L1</label>
    </interactant>
    <organismsDiffer>false</organismsDiffer>
    <experiments>3</experiments>
</comment>
<comment type="interaction">
    <interactant intactId="EBI-307352">
        <id>Q04864</id>
    </interactant>
    <interactant intactId="EBI-723524">
        <id>Q7Z7H8</id>
        <label>MRPL10</label>
    </interactant>
    <organismsDiffer>false</organismsDiffer>
    <experiments>3</experiments>
</comment>
<comment type="interaction">
    <interactant intactId="EBI-307352">
        <id>Q04864</id>
    </interactant>
    <interactant intactId="EBI-372578">
        <id>Q9UJ70</id>
        <label>NAGK</label>
    </interactant>
    <organismsDiffer>false</organismsDiffer>
    <experiments>3</experiments>
</comment>
<comment type="interaction">
    <interactant intactId="EBI-307352">
        <id>Q04864</id>
    </interactant>
    <interactant intactId="EBI-713635">
        <id>O43639</id>
        <label>NCK2</label>
    </interactant>
    <organismsDiffer>false</organismsDiffer>
    <experiments>3</experiments>
</comment>
<comment type="interaction">
    <interactant intactId="EBI-307352">
        <id>Q04864</id>
    </interactant>
    <interactant intactId="EBI-10298649">
        <id>Q9BU61-2</id>
        <label>NDUFAF3</label>
    </interactant>
    <organismsDiffer>false</organismsDiffer>
    <experiments>3</experiments>
</comment>
<comment type="interaction">
    <interactant intactId="EBI-307352">
        <id>Q04864</id>
    </interactant>
    <interactant intactId="EBI-10174302">
        <id>A8K3C2</id>
        <label>NECAP1</label>
    </interactant>
    <organismsDiffer>false</organismsDiffer>
    <experiments>3</experiments>
</comment>
<comment type="interaction">
    <interactant intactId="EBI-307352">
        <id>Q04864</id>
    </interactant>
    <interactant intactId="EBI-2108053">
        <id>Q14511</id>
        <label>NEDD9</label>
    </interactant>
    <organismsDiffer>false</organismsDiffer>
    <experiments>3</experiments>
</comment>
<comment type="interaction">
    <interactant intactId="EBI-307352">
        <id>Q04864</id>
    </interactant>
    <interactant intactId="EBI-10281234">
        <id>Q969S2</id>
        <label>NEIL2</label>
    </interactant>
    <organismsDiffer>false</organismsDiffer>
    <experiments>3</experiments>
</comment>
<comment type="interaction">
    <interactant intactId="EBI-307352">
        <id>Q04864</id>
    </interactant>
    <interactant intactId="EBI-10328570">
        <id>Q9Y4Z2</id>
        <label>NEUROG3</label>
    </interactant>
    <organismsDiffer>false</organismsDiffer>
    <experiments>3</experiments>
</comment>
<comment type="interaction">
    <interactant intactId="EBI-307352">
        <id>Q04864</id>
    </interactant>
    <interactant intactId="EBI-2007911">
        <id>Q16236</id>
        <label>NFE2L2</label>
    </interactant>
    <organismsDiffer>false</organismsDiffer>
    <experiments>5</experiments>
</comment>
<comment type="interaction">
    <interactant intactId="EBI-307352">
        <id>Q04864</id>
    </interactant>
    <interactant intactId="EBI-307326">
        <id>Q00653</id>
        <label>NFKB2</label>
    </interactant>
    <organismsDiffer>false</organismsDiffer>
    <experiments>5</experiments>
</comment>
<comment type="interaction">
    <interactant intactId="EBI-307352">
        <id>Q04864</id>
    </interactant>
    <interactant intactId="EBI-307386">
        <id>P25963</id>
        <label>NFKBIA</label>
    </interactant>
    <organismsDiffer>false</organismsDiffer>
    <experiments>5</experiments>
</comment>
<comment type="interaction">
    <interactant intactId="EBI-307352">
        <id>Q04864</id>
    </interactant>
    <interactant intactId="EBI-352889">
        <id>Q15653</id>
        <label>NFKBIB</label>
    </interactant>
    <organismsDiffer>false</organismsDiffer>
    <experiments>3</experiments>
</comment>
<comment type="interaction">
    <interactant intactId="EBI-307352">
        <id>Q04864</id>
    </interactant>
    <interactant intactId="EBI-355098">
        <id>O00221</id>
        <label>NFKBIE</label>
    </interactant>
    <organismsDiffer>false</organismsDiffer>
    <experiments>4</experiments>
</comment>
<comment type="interaction">
    <interactant intactId="EBI-307352">
        <id>Q04864</id>
    </interactant>
    <interactant intactId="EBI-10311409">
        <id>Q9NPG2</id>
        <label>NGB</label>
    </interactant>
    <organismsDiffer>false</organismsDiffer>
    <experiments>3</experiments>
</comment>
<comment type="interaction">
    <interactant intactId="EBI-307352">
        <id>Q04864</id>
    </interactant>
    <interactant intactId="EBI-744782">
        <id>Q9Y5B8</id>
        <label>NME7</label>
    </interactant>
    <organismsDiffer>false</organismsDiffer>
    <experiments>3</experiments>
</comment>
<comment type="interaction">
    <interactant intactId="EBI-307352">
        <id>Q04864</id>
    </interactant>
    <interactant intactId="EBI-1055462">
        <id>Q5SY16</id>
        <label>NOL9</label>
    </interactant>
    <organismsDiffer>false</organismsDiffer>
    <experiments>3</experiments>
</comment>
<comment type="interaction">
    <interactant intactId="EBI-307352">
        <id>Q04864</id>
    </interactant>
    <interactant intactId="EBI-10260040">
        <id>Q86WQ0</id>
        <label>NR2C2AP</label>
    </interactant>
    <organismsDiffer>false</organismsDiffer>
    <experiments>3</experiments>
</comment>
<comment type="interaction">
    <interactant intactId="EBI-307352">
        <id>Q04864</id>
    </interactant>
    <interactant intactId="EBI-536866">
        <id>O95848</id>
        <label>NUDT14</label>
    </interactant>
    <organismsDiffer>false</organismsDiffer>
    <experiments>3</experiments>
</comment>
<comment type="interaction">
    <interactant intactId="EBI-307352">
        <id>Q04864</id>
    </interactant>
    <interactant intactId="EBI-752122">
        <id>Q9NPJ8</id>
        <label>NXT2</label>
    </interactant>
    <organismsDiffer>false</organismsDiffer>
    <experiments>3</experiments>
</comment>
<comment type="interaction">
    <interactant intactId="EBI-307352">
        <id>Q04864</id>
    </interactant>
    <interactant intactId="EBI-10281601">
        <id>Q9UMX2</id>
        <label>OAZ3</label>
    </interactant>
    <organismsDiffer>false</organismsDiffer>
    <experiments>3</experiments>
</comment>
<comment type="interaction">
    <interactant intactId="EBI-307352">
        <id>Q04864</id>
    </interactant>
    <interactant intactId="EBI-9057006">
        <id>Q9UJX0</id>
        <label>OSGIN1</label>
    </interactant>
    <organismsDiffer>false</organismsDiffer>
    <experiments>3</experiments>
</comment>
<comment type="interaction">
    <interactant intactId="EBI-307352">
        <id>Q04864</id>
    </interactant>
    <interactant intactId="EBI-1051152">
        <id>Q92882</id>
        <label>OSTF1</label>
    </interactant>
    <organismsDiffer>false</organismsDiffer>
    <experiments>3</experiments>
</comment>
<comment type="interaction">
    <interactant intactId="EBI-307352">
        <id>Q04864</id>
    </interactant>
    <interactant intactId="EBI-746259">
        <id>Q96DC9</id>
        <label>OTUB2</label>
    </interactant>
    <organismsDiffer>false</organismsDiffer>
    <experiments>3</experiments>
</comment>
<comment type="interaction">
    <interactant intactId="EBI-307352">
        <id>Q04864</id>
    </interactant>
    <interactant intactId="EBI-1054396">
        <id>Q01804</id>
        <label>OTUD4</label>
    </interactant>
    <organismsDiffer>false</organismsDiffer>
    <experiments>3</experiments>
</comment>
<comment type="interaction">
    <interactant intactId="EBI-307352">
        <id>Q04864</id>
    </interactant>
    <interactant intactId="EBI-3921217">
        <id>Q9HBI0</id>
        <label>PARVG</label>
    </interactant>
    <organismsDiffer>false</organismsDiffer>
    <experiments>3</experiments>
</comment>
<comment type="interaction">
    <interactant intactId="EBI-307352">
        <id>Q04864</id>
    </interactant>
    <interactant intactId="EBI-10277790">
        <id>Q8WXA2</id>
        <label>PATE1</label>
    </interactant>
    <organismsDiffer>false</organismsDiffer>
    <experiments>3</experiments>
</comment>
<comment type="interaction">
    <interactant intactId="EBI-307352">
        <id>Q04864</id>
    </interactant>
    <interactant intactId="EBI-10310808">
        <id>Q9HCN3</id>
        <label>PGAP6</label>
    </interactant>
    <organismsDiffer>false</organismsDiffer>
    <experiments>3</experiments>
</comment>
<comment type="interaction">
    <interactant intactId="EBI-307352">
        <id>Q04864</id>
    </interactant>
    <interactant intactId="EBI-10232538">
        <id>Q8WWB5</id>
        <label>PIH1D2</label>
    </interactant>
    <organismsDiffer>false</organismsDiffer>
    <experiments>4</experiments>
</comment>
<comment type="interaction">
    <interactant intactId="EBI-307352">
        <id>Q04864</id>
    </interactant>
    <interactant intactId="EBI-998637">
        <id>Q15147</id>
        <label>PLCB4</label>
    </interactant>
    <organismsDiffer>false</organismsDiffer>
    <experiments>3</experiments>
</comment>
<comment type="interaction">
    <interactant intactId="EBI-307352">
        <id>Q04864</id>
    </interactant>
    <interactant intactId="EBI-10241513">
        <id>Q494U1</id>
        <label>PLEKHN1</label>
    </interactant>
    <organismsDiffer>false</organismsDiffer>
    <experiments>4</experiments>
</comment>
<comment type="interaction">
    <interactant intactId="EBI-307352">
        <id>Q04864</id>
    </interactant>
    <interactant intactId="EBI-713847">
        <id>P56282</id>
        <label>POLE2</label>
    </interactant>
    <organismsDiffer>false</organismsDiffer>
    <experiments>3</experiments>
</comment>
<comment type="interaction">
    <interactant intactId="EBI-307352">
        <id>Q04864</id>
    </interactant>
    <interactant intactId="EBI-359472">
        <id>O95602</id>
        <label>POLR1A</label>
    </interactant>
    <organismsDiffer>false</organismsDiffer>
    <experiments>3</experiments>
</comment>
<comment type="interaction">
    <interactant intactId="EBI-307352">
        <id>Q04864</id>
    </interactant>
    <interactant intactId="EBI-359527">
        <id>P62875</id>
        <label>POLR2L</label>
    </interactant>
    <organismsDiffer>false</organismsDiffer>
    <experiments>3</experiments>
</comment>
<comment type="interaction">
    <interactant intactId="EBI-307352">
        <id>Q04864</id>
    </interactant>
    <interactant intactId="EBI-366525">
        <id>Q969H6</id>
        <label>POP5</label>
    </interactant>
    <organismsDiffer>false</organismsDiffer>
    <experiments>3</experiments>
</comment>
<comment type="interaction">
    <interactant intactId="EBI-307352">
        <id>Q04864</id>
    </interactant>
    <interactant intactId="EBI-10312448">
        <id>Q9NQV6</id>
        <label>PRDM10</label>
    </interactant>
    <organismsDiffer>false</organismsDiffer>
    <experiments>3</experiments>
</comment>
<comment type="interaction">
    <interactant intactId="EBI-307352">
        <id>Q04864</id>
    </interactant>
    <interactant intactId="EBI-359352">
        <id>P25786</id>
        <label>PSMA1</label>
    </interactant>
    <organismsDiffer>false</organismsDiffer>
    <experiments>3</experiments>
</comment>
<comment type="interaction">
    <interactant intactId="EBI-307352">
        <id>Q04864</id>
    </interactant>
    <interactant intactId="EBI-10234038">
        <id>P43115-12</id>
        <label>PTGER3</label>
    </interactant>
    <organismsDiffer>false</organismsDiffer>
    <experiments>3</experiments>
</comment>
<comment type="interaction">
    <interactant intactId="EBI-307352">
        <id>Q04864</id>
    </interactant>
    <interactant intactId="EBI-1383632">
        <id>Q13882</id>
        <label>PTK6</label>
    </interactant>
    <organismsDiffer>false</organismsDiffer>
    <experiments>3</experiments>
</comment>
<comment type="interaction">
    <interactant intactId="EBI-307352">
        <id>Q04864</id>
    </interactant>
    <interactant intactId="EBI-10326419">
        <id>Q9Y2K5-2</id>
        <label>R3HDM2</label>
    </interactant>
    <organismsDiffer>false</organismsDiffer>
    <experiments>3</experiments>
</comment>
<comment type="interaction">
    <interactant intactId="EBI-307352">
        <id>Q04864</id>
    </interactant>
    <interactant intactId="EBI-10244509">
        <id>Q5JT25</id>
        <label>RAB41</label>
    </interactant>
    <organismsDiffer>false</organismsDiffer>
    <experiments>3</experiments>
</comment>
<comment type="interaction">
    <interactant intactId="EBI-307352">
        <id>Q04864</id>
    </interactant>
    <interactant intactId="EBI-713992">
        <id>P47224</id>
        <label>RABIF</label>
    </interactant>
    <organismsDiffer>false</organismsDiffer>
    <experiments>3</experiments>
</comment>
<comment type="interaction">
    <interactant intactId="EBI-307352">
        <id>Q04864</id>
    </interactant>
    <interactant intactId="EBI-367390">
        <id>Q8WWW0</id>
        <label>RASSF5</label>
    </interactant>
    <organismsDiffer>false</organismsDiffer>
    <experiments>3</experiments>
</comment>
<comment type="interaction">
    <interactant intactId="EBI-307352">
        <id>Q04864</id>
    </interactant>
    <interactant intactId="EBI-6654703">
        <id>Q14498-3</id>
        <label>RBM39</label>
    </interactant>
    <organismsDiffer>false</organismsDiffer>
    <experiments>3</experiments>
</comment>
<comment type="interaction">
    <interactant intactId="EBI-307352">
        <id>Q04864</id>
    </interactant>
    <interactant intactId="EBI-10253121">
        <id>Q6P9E2</id>
        <label>RECK</label>
    </interactant>
    <organismsDiffer>false</organismsDiffer>
    <experiments>3</experiments>
</comment>
<comment type="interaction">
    <interactant intactId="EBI-307352">
        <id>Q04864</id>
    </interactant>
    <interactant intactId="EBI-73886">
        <id>Q04206</id>
        <label>RELA</label>
    </interactant>
    <organismsDiffer>false</organismsDiffer>
    <experiments>5</experiments>
</comment>
<comment type="interaction">
    <interactant intactId="EBI-307352">
        <id>Q04864</id>
    </interactant>
    <interactant intactId="EBI-289947">
        <id>Q04206-2</id>
        <label>RELA</label>
    </interactant>
    <organismsDiffer>false</organismsDiffer>
    <experiments>2</experiments>
</comment>
<comment type="interaction">
    <interactant intactId="EBI-307352">
        <id>Q04864</id>
    </interactant>
    <interactant intactId="EBI-10223388">
        <id>Q04206-3</id>
        <label>RELA</label>
    </interactant>
    <organismsDiffer>false</organismsDiffer>
    <experiments>3</experiments>
</comment>
<comment type="interaction">
    <interactant intactId="EBI-307352">
        <id>Q04864</id>
    </interactant>
    <interactant intactId="EBI-10262361">
        <id>Q8IX06</id>
        <label>REXO1L1P</label>
    </interactant>
    <organismsDiffer>false</organismsDiffer>
    <experiments>3</experiments>
</comment>
<comment type="interaction">
    <interactant intactId="EBI-307352">
        <id>Q04864</id>
    </interactant>
    <interactant intactId="EBI-10226430">
        <id>Q0D2K3</id>
        <label>RIPPLY1</label>
    </interactant>
    <organismsDiffer>false</organismsDiffer>
    <experiments>3</experiments>
</comment>
<comment type="interaction">
    <interactant intactId="EBI-307352">
        <id>Q04864</id>
    </interactant>
    <interactant intactId="EBI-10248548">
        <id>Q63HN8-6</id>
        <label>RNF213</label>
    </interactant>
    <organismsDiffer>false</organismsDiffer>
    <experiments>3</experiments>
</comment>
<comment type="interaction">
    <interactant intactId="EBI-307352">
        <id>Q04864</id>
    </interactant>
    <interactant intactId="EBI-748350">
        <id>Q9UHP6</id>
        <label>RSPH14</label>
    </interactant>
    <organismsDiffer>false</organismsDiffer>
    <experiments>3</experiments>
</comment>
<comment type="interaction">
    <interactant intactId="EBI-307352">
        <id>Q04864</id>
    </interactant>
    <interactant intactId="EBI-711613">
        <id>P21673</id>
        <label>SAT1</label>
    </interactant>
    <organismsDiffer>false</organismsDiffer>
    <experiments>3</experiments>
</comment>
<comment type="interaction">
    <interactant intactId="EBI-307352">
        <id>Q04864</id>
    </interactant>
    <interactant intactId="EBI-727004">
        <id>O00560</id>
        <label>SDCBP</label>
    </interactant>
    <organismsDiffer>false</organismsDiffer>
    <experiments>3</experiments>
</comment>
<comment type="interaction">
    <interactant intactId="EBI-307352">
        <id>Q04864</id>
    </interactant>
    <interactant intactId="EBI-10320311">
        <id>Q9UDX3</id>
        <label>SEC14L4</label>
    </interactant>
    <organismsDiffer>false</organismsDiffer>
    <experiments>3</experiments>
</comment>
<comment type="interaction">
    <interactant intactId="EBI-307352">
        <id>Q04864</id>
    </interactant>
    <interactant intactId="EBI-1767898">
        <id>O94979</id>
        <label>SEC31A</label>
    </interactant>
    <organismsDiffer>false</organismsDiffer>
    <experiments>3</experiments>
</comment>
<comment type="interaction">
    <interactant intactId="EBI-307352">
        <id>Q04864</id>
    </interactant>
    <interactant intactId="EBI-10176094">
        <id>Q16181-2</id>
        <label>SEPTIN7</label>
    </interactant>
    <organismsDiffer>false</organismsDiffer>
    <experiments>3</experiments>
</comment>
<comment type="interaction">
    <interactant intactId="EBI-307352">
        <id>Q04864</id>
    </interactant>
    <interactant intactId="EBI-10287091">
        <id>Q96H72</id>
        <label>SLC39A13</label>
    </interactant>
    <organismsDiffer>false</organismsDiffer>
    <experiments>3</experiments>
</comment>
<comment type="interaction">
    <interactant intactId="EBI-307352">
        <id>Q04864</id>
    </interactant>
    <interactant intactId="EBI-7225508">
        <id>Q96GZ6</id>
        <label>SLC41A3</label>
    </interactant>
    <organismsDiffer>false</organismsDiffer>
    <experiments>3</experiments>
</comment>
<comment type="interaction">
    <interactant intactId="EBI-307352">
        <id>Q04864</id>
    </interactant>
    <interactant intactId="EBI-3843589">
        <id>P48065</id>
        <label>SLC6A12</label>
    </interactant>
    <organismsDiffer>false</organismsDiffer>
    <experiments>3</experiments>
</comment>
<comment type="interaction">
    <interactant intactId="EBI-307352">
        <id>Q04864</id>
    </interactant>
    <interactant intactId="EBI-9675976">
        <id>Q9BV90</id>
        <label>SNRNP25</label>
    </interactant>
    <organismsDiffer>false</organismsDiffer>
    <experiments>3</experiments>
</comment>
<comment type="interaction">
    <interactant intactId="EBI-307352">
        <id>Q04864</id>
    </interactant>
    <interactant intactId="EBI-749295">
        <id>O75716</id>
        <label>STK16</label>
    </interactant>
    <organismsDiffer>false</organismsDiffer>
    <experiments>3</experiments>
</comment>
<comment type="interaction">
    <interactant intactId="EBI-307352">
        <id>Q04864</id>
    </interactant>
    <interactant intactId="EBI-10245139">
        <id>Q5T011-5</id>
        <label>SZT2</label>
    </interactant>
    <organismsDiffer>false</organismsDiffer>
    <experiments>3</experiments>
</comment>
<comment type="interaction">
    <interactant intactId="EBI-307352">
        <id>Q04864</id>
    </interactant>
    <interactant intactId="EBI-717810">
        <id>Q08117</id>
        <label>TLE5</label>
    </interactant>
    <organismsDiffer>false</organismsDiffer>
    <experiments>3</experiments>
</comment>
<comment type="interaction">
    <interactant intactId="EBI-307352">
        <id>Q04864</id>
    </interactant>
    <interactant intactId="EBI-359372">
        <id>Q8NFZ5</id>
        <label>TNIP2</label>
    </interactant>
    <organismsDiffer>false</organismsDiffer>
    <experiments>3</experiments>
</comment>
<comment type="interaction">
    <interactant intactId="EBI-307352">
        <id>Q04864</id>
    </interactant>
    <interactant intactId="EBI-949753">
        <id>Q63HR2</id>
        <label>TNS2</label>
    </interactant>
    <organismsDiffer>false</organismsDiffer>
    <experiments>3</experiments>
</comment>
<comment type="interaction">
    <interactant intactId="EBI-307352">
        <id>Q04864</id>
    </interactant>
    <interactant intactId="EBI-747601">
        <id>Q9UL33</id>
        <label>TRAPPC2L</label>
    </interactant>
    <organismsDiffer>false</organismsDiffer>
    <experiments>3</experiments>
</comment>
<comment type="interaction">
    <interactant intactId="EBI-307352">
        <id>Q04864</id>
    </interactant>
    <interactant intactId="EBI-10259086">
        <id>Q86UV6-2</id>
        <label>TRIM74</label>
    </interactant>
    <organismsDiffer>false</organismsDiffer>
    <experiments>3</experiments>
</comment>
<comment type="interaction">
    <interactant intactId="EBI-307352">
        <id>Q04864</id>
    </interactant>
    <interactant intactId="EBI-717229">
        <id>Q9Y5U2</id>
        <label>TSSC4</label>
    </interactant>
    <organismsDiffer>false</organismsDiffer>
    <experiments>3</experiments>
</comment>
<comment type="interaction">
    <interactant intactId="EBI-307352">
        <id>Q04864</id>
    </interactant>
    <interactant intactId="EBI-3918381">
        <id>Q96PN8</id>
        <label>TSSK3</label>
    </interactant>
    <organismsDiffer>false</organismsDiffer>
    <experiments>3</experiments>
</comment>
<comment type="interaction">
    <interactant intactId="EBI-307352">
        <id>Q04864</id>
    </interactant>
    <interactant intactId="EBI-8994397">
        <id>Q5T7W7</id>
        <label>TSTD2</label>
    </interactant>
    <organismsDiffer>false</organismsDiffer>
    <experiments>3</experiments>
</comment>
<comment type="interaction">
    <interactant intactId="EBI-307352">
        <id>Q04864</id>
    </interactant>
    <interactant intactId="EBI-948354">
        <id>Q6DKK2</id>
        <label>TTC19</label>
    </interactant>
    <organismsDiffer>false</organismsDiffer>
    <experiments>3</experiments>
</comment>
<comment type="interaction">
    <interactant intactId="EBI-307352">
        <id>Q04864</id>
    </interactant>
    <interactant intactId="EBI-10220701">
        <id>A0A0B4J1Y2</id>
        <label>TTC21A</label>
    </interactant>
    <organismsDiffer>false</organismsDiffer>
    <experiments>3</experiments>
</comment>
<comment type="interaction">
    <interactant intactId="EBI-307352">
        <id>Q04864</id>
    </interactant>
    <interactant intactId="EBI-10309345">
        <id>Q9NX01</id>
        <label>TXNL4B</label>
    </interactant>
    <organismsDiffer>false</organismsDiffer>
    <experiments>3</experiments>
</comment>
<comment type="interaction">
    <interactant intactId="EBI-307352">
        <id>Q04864</id>
    </interactant>
    <interactant intactId="EBI-2105393">
        <id>P57075</id>
        <label>UBASH3A</label>
    </interactant>
    <organismsDiffer>false</organismsDiffer>
    <experiments>3</experiments>
</comment>
<comment type="interaction">
    <interactant intactId="EBI-307352">
        <id>Q04864</id>
    </interactant>
    <interactant intactId="EBI-473850">
        <id>P61086</id>
        <label>UBE2K</label>
    </interactant>
    <organismsDiffer>false</organismsDiffer>
    <experiments>3</experiments>
</comment>
<comment type="interaction">
    <interactant intactId="EBI-307352">
        <id>Q04864</id>
    </interactant>
    <interactant intactId="EBI-720977">
        <id>Q9H832</id>
        <label>UBE2Z</label>
    </interactant>
    <organismsDiffer>false</organismsDiffer>
    <experiments>3</experiments>
</comment>
<comment type="interaction">
    <interactant intactId="EBI-307352">
        <id>Q04864</id>
    </interactant>
    <interactant intactId="EBI-741945">
        <id>Q9BRG1</id>
        <label>VPS25</label>
    </interactant>
    <organismsDiffer>false</organismsDiffer>
    <experiments>4</experiments>
</comment>
<comment type="interaction">
    <interactant intactId="EBI-307352">
        <id>Q04864</id>
    </interactant>
    <interactant intactId="EBI-10254561">
        <id>Q6UX98</id>
        <label>ZDHHC24</label>
    </interactant>
    <organismsDiffer>false</organismsDiffer>
    <experiments>3</experiments>
</comment>
<comment type="interaction">
    <interactant intactId="EBI-307352">
        <id>Q04864</id>
    </interactant>
    <interactant intactId="EBI-740727">
        <id>Q8TAU3</id>
        <label>ZNF417</label>
    </interactant>
    <organismsDiffer>false</organismsDiffer>
    <experiments>3</experiments>
</comment>
<comment type="interaction">
    <interactant intactId="EBI-307352">
        <id>Q04864</id>
    </interactant>
    <interactant intactId="EBI-10256834">
        <id>Q7Z398</id>
        <label>ZNF550</label>
    </interactant>
    <organismsDiffer>false</organismsDiffer>
    <experiments>3</experiments>
</comment>
<comment type="interaction">
    <interactant intactId="EBI-307352">
        <id>Q04864</id>
    </interactant>
    <interactant intactId="EBI-10273713">
        <id>Q8TBZ8</id>
        <label>ZNF564</label>
    </interactant>
    <organismsDiffer>false</organismsDiffer>
    <experiments>3</experiments>
</comment>
<comment type="interaction">
    <interactant intactId="EBI-307352">
        <id>Q04864</id>
    </interactant>
    <interactant intactId="EBI-10172590">
        <id>Q7Z3I7</id>
        <label>ZNF572</label>
    </interactant>
    <organismsDiffer>false</organismsDiffer>
    <experiments>3</experiments>
</comment>
<comment type="interaction">
    <interactant intactId="EBI-307352">
        <id>Q04864</id>
    </interactant>
    <interactant intactId="EBI-9676069">
        <id>Q7L2R6</id>
        <label>ZNF765</label>
    </interactant>
    <organismsDiffer>false</organismsDiffer>
    <experiments>3</experiments>
</comment>
<comment type="interaction">
    <interactant intactId="EBI-307352">
        <id>Q04864</id>
    </interactant>
    <interactant intactId="EBI-10174421">
        <id>A8K5H9</id>
    </interactant>
    <organismsDiffer>false</organismsDiffer>
    <experiments>3</experiments>
</comment>
<comment type="interaction">
    <interactant intactId="EBI-307352">
        <id>Q04864</id>
    </interactant>
    <interactant intactId="EBI-10175581">
        <id>B2R8Y4</id>
    </interactant>
    <organismsDiffer>false</organismsDiffer>
    <experiments>3</experiments>
</comment>
<comment type="interaction">
    <interactant intactId="EBI-307352">
        <id>Q04864</id>
    </interactant>
    <interactant intactId="EBI-10282301">
        <id>Q96BA4</id>
    </interactant>
    <organismsDiffer>false</organismsDiffer>
    <experiments>3</experiments>
</comment>
<comment type="interaction">
    <interactant intactId="EBI-307352">
        <id>Q04864</id>
    </interactant>
    <interactant intactId="EBI-25475877">
        <id>PRO_0000449627</id>
        <label>rep</label>
        <dbReference type="UniProtKB" id="P0DTD1"/>
    </interactant>
    <organismsDiffer>true</organismsDiffer>
    <experiments>3</experiments>
</comment>
<comment type="interaction">
    <interactant intactId="EBI-307352">
        <id>Q04864</id>
    </interactant>
    <interactant intactId="EBI-25475920">
        <id>PRO_0000449631</id>
        <label>rep</label>
        <dbReference type="UniProtKB" id="P0DTD1"/>
    </interactant>
    <organismsDiffer>true</organismsDiffer>
    <experiments>4</experiments>
</comment>
<comment type="interaction">
    <interactant intactId="EBI-307352">
        <id>Q04864</id>
    </interactant>
    <interactant intactId="EBI-25492395">
        <id>PRO_0000449633</id>
        <label>rep</label>
        <dbReference type="UniProtKB" id="P0DTD1"/>
    </interactant>
    <organismsDiffer>true</organismsDiffer>
    <experiments>4</experiments>
</comment>
<comment type="interaction">
    <interactant intactId="EBI-10829018">
        <id>Q04864-2</id>
    </interactant>
    <interactant intactId="EBI-16431307">
        <id>K7EM05</id>
        <label>ACBD4</label>
    </interactant>
    <organismsDiffer>false</organismsDiffer>
    <experiments>3</experiments>
</comment>
<comment type="interaction">
    <interactant intactId="EBI-10829018">
        <id>Q04864-2</id>
    </interactant>
    <interactant intactId="EBI-11954993">
        <id>Q8WYK0</id>
        <label>ACOT12</label>
    </interactant>
    <organismsDiffer>false</organismsDiffer>
    <experiments>3</experiments>
</comment>
<comment type="interaction">
    <interactant intactId="EBI-10829018">
        <id>Q04864-2</id>
    </interactant>
    <interactant intactId="EBI-1237371">
        <id>O14734</id>
        <label>ACOT8</label>
    </interactant>
    <organismsDiffer>false</organismsDiffer>
    <experiments>3</experiments>
</comment>
<comment type="interaction">
    <interactant intactId="EBI-10829018">
        <id>Q04864-2</id>
    </interactant>
    <interactant intactId="EBI-8643161">
        <id>Q9NX04</id>
        <label>AIRIM</label>
    </interactant>
    <organismsDiffer>false</organismsDiffer>
    <experiments>3</experiments>
</comment>
<comment type="interaction">
    <interactant intactId="EBI-10829018">
        <id>Q04864-2</id>
    </interactant>
    <interactant intactId="EBI-296058">
        <id>P31751</id>
        <label>AKT2</label>
    </interactant>
    <organismsDiffer>false</organismsDiffer>
    <experiments>3</experiments>
</comment>
<comment type="interaction">
    <interactant intactId="EBI-10829018">
        <id>Q04864-2</id>
    </interactant>
    <interactant intactId="EBI-745213">
        <id>P29972</id>
        <label>AQP1</label>
    </interactant>
    <organismsDiffer>false</organismsDiffer>
    <experiments>3</experiments>
</comment>
<comment type="interaction">
    <interactant intactId="EBI-10829018">
        <id>Q04864-2</id>
    </interactant>
    <interactant intactId="EBI-638194">
        <id>P53365</id>
        <label>ARFIP2</label>
    </interactant>
    <organismsDiffer>false</organismsDiffer>
    <experiments>3</experiments>
</comment>
<comment type="interaction">
    <interactant intactId="EBI-10829018">
        <id>Q04864-2</id>
    </interactant>
    <interactant intactId="EBI-10186132">
        <id>Q0P5N6</id>
        <label>ARL16</label>
    </interactant>
    <organismsDiffer>false</organismsDiffer>
    <experiments>3</experiments>
</comment>
<comment type="interaction">
    <interactant intactId="EBI-10829018">
        <id>Q04864-2</id>
    </interactant>
    <interactant intactId="EBI-742909">
        <id>Q9H6L4</id>
        <label>ARMC7</label>
    </interactant>
    <organismsDiffer>false</organismsDiffer>
    <experiments>3</experiments>
</comment>
<comment type="interaction">
    <interactant intactId="EBI-10829018">
        <id>Q04864-2</id>
    </interactant>
    <interactant intactId="EBI-2609717">
        <id>Q8TDY4</id>
        <label>ASAP3</label>
    </interactant>
    <organismsDiffer>false</organismsDiffer>
    <experiments>3</experiments>
</comment>
<comment type="interaction">
    <interactant intactId="EBI-10829018">
        <id>Q04864-2</id>
    </interactant>
    <interactant intactId="EBI-743231">
        <id>O95671</id>
        <label>ASMTL</label>
    </interactant>
    <organismsDiffer>false</organismsDiffer>
    <experiments>3</experiments>
</comment>
<comment type="interaction">
    <interactant intactId="EBI-10829018">
        <id>Q04864-2</id>
    </interactant>
    <interactant intactId="EBI-12006308">
        <id>Q7Z3C6-3</id>
        <label>ATG9A</label>
    </interactant>
    <organismsDiffer>false</organismsDiffer>
    <experiments>3</experiments>
</comment>
<comment type="interaction">
    <interactant intactId="EBI-10829018">
        <id>Q04864-2</id>
    </interactant>
    <interactant intactId="EBI-3923949">
        <id>Q8N8Y2</id>
        <label>ATP6V0D2</label>
    </interactant>
    <organismsDiffer>false</organismsDiffer>
    <experiments>3</experiments>
</comment>
<comment type="interaction">
    <interactant intactId="EBI-10829018">
        <id>Q04864-2</id>
    </interactant>
    <interactant intactId="EBI-10270867">
        <id>Q8NEY4-2</id>
        <label>ATP6V1C2</label>
    </interactant>
    <organismsDiffer>false</organismsDiffer>
    <experiments>3</experiments>
</comment>
<comment type="interaction">
    <interactant intactId="EBI-10829018">
        <id>Q04864-2</id>
    </interactant>
    <interactant intactId="EBI-1166928">
        <id>Q8N5M1</id>
        <label>ATPAF2</label>
    </interactant>
    <organismsDiffer>false</organismsDiffer>
    <experiments>3</experiments>
</comment>
<comment type="interaction">
    <interactant intactId="EBI-10829018">
        <id>Q04864-2</id>
    </interactant>
    <interactant intactId="EBI-930964">
        <id>P54253</id>
        <label>ATXN1</label>
    </interactant>
    <organismsDiffer>false</organismsDiffer>
    <experiments>3</experiments>
</comment>
<comment type="interaction">
    <interactant intactId="EBI-10829018">
        <id>Q04864-2</id>
    </interactant>
    <interactant intactId="EBI-16429704">
        <id>A0A0S2Z5G4</id>
        <label>BANP</label>
    </interactant>
    <organismsDiffer>false</organismsDiffer>
    <experiments>3</experiments>
</comment>
<comment type="interaction">
    <interactant intactId="EBI-10829018">
        <id>Q04864-2</id>
    </interactant>
    <interactant intactId="EBI-16429313">
        <id>B4DE54</id>
        <label>BANP</label>
    </interactant>
    <organismsDiffer>false</organismsDiffer>
    <experiments>3</experiments>
</comment>
<comment type="interaction">
    <interactant intactId="EBI-10829018">
        <id>Q04864-2</id>
    </interactant>
    <interactant intactId="EBI-11524452">
        <id>Q8N9N5-2</id>
        <label>BANP</label>
    </interactant>
    <organismsDiffer>false</organismsDiffer>
    <experiments>6</experiments>
</comment>
<comment type="interaction">
    <interactant intactId="EBI-10829018">
        <id>Q04864-2</id>
    </interactant>
    <interactant intactId="EBI-16429296">
        <id>Q8N9N5-7</id>
        <label>BANP</label>
    </interactant>
    <organismsDiffer>false</organismsDiffer>
    <experiments>3</experiments>
</comment>
<comment type="interaction">
    <interactant intactId="EBI-10829018">
        <id>Q04864-2</id>
    </interactant>
    <interactant intactId="EBI-16435728">
        <id>A0A0S2Z328</id>
        <label>BBS4</label>
    </interactant>
    <organismsDiffer>false</organismsDiffer>
    <experiments>3</experiments>
</comment>
<comment type="interaction">
    <interactant intactId="EBI-10829018">
        <id>Q04864-2</id>
    </interactant>
    <interactant intactId="EBI-1805814">
        <id>Q96RK4</id>
        <label>BBS4</label>
    </interactant>
    <organismsDiffer>false</organismsDiffer>
    <experiments>3</experiments>
</comment>
<comment type="interaction">
    <interactant intactId="EBI-10829018">
        <id>Q04864-2</id>
    </interactant>
    <interactant intactId="EBI-10247136">
        <id>Q5TBC7</id>
        <label>BCL2L15</label>
    </interactant>
    <organismsDiffer>false</organismsDiffer>
    <experiments>3</experiments>
</comment>
<comment type="interaction">
    <interactant intactId="EBI-10829018">
        <id>Q04864-2</id>
    </interactant>
    <interactant intactId="EBI-765407">
        <id>P41182</id>
        <label>BCL6</label>
    </interactant>
    <organismsDiffer>false</organismsDiffer>
    <experiments>3</experiments>
</comment>
<comment type="interaction">
    <interactant intactId="EBI-10829018">
        <id>Q04864-2</id>
    </interactant>
    <interactant intactId="EBI-12002214">
        <id>Q9H3H3-3</id>
        <label>C11orf68</label>
    </interactant>
    <organismsDiffer>false</organismsDiffer>
    <experiments>3</experiments>
</comment>
<comment type="interaction">
    <interactant intactId="EBI-10829018">
        <id>Q04864-2</id>
    </interactant>
    <interactant intactId="EBI-725606">
        <id>Q9NWQ9</id>
        <label>C14orf119</label>
    </interactant>
    <organismsDiffer>false</organismsDiffer>
    <experiments>3</experiments>
</comment>
<comment type="interaction">
    <interactant intactId="EBI-10829018">
        <id>Q04864-2</id>
    </interactant>
    <interactant intactId="EBI-2874661">
        <id>Q9BV19</id>
        <label>C1orf50</label>
    </interactant>
    <organismsDiffer>false</organismsDiffer>
    <experiments>3</experiments>
</comment>
<comment type="interaction">
    <interactant intactId="EBI-10829018">
        <id>Q04864-2</id>
    </interactant>
    <interactant intactId="EBI-12049899">
        <id>Q96LT6</id>
        <label>C1orf74</label>
    </interactant>
    <organismsDiffer>false</organismsDiffer>
    <experiments>3</experiments>
</comment>
<comment type="interaction">
    <interactant intactId="EBI-10829018">
        <id>Q04864-2</id>
    </interactant>
    <interactant intactId="EBI-16435493">
        <id>A0A0S2Z6I7</id>
        <label>C6orf142</label>
    </interactant>
    <organismsDiffer>false</organismsDiffer>
    <experiments>3</experiments>
</comment>
<comment type="interaction">
    <interactant intactId="EBI-10829018">
        <id>Q04864-2</id>
    </interactant>
    <interactant intactId="EBI-5329490">
        <id>Q13698</id>
        <label>CACNA1S</label>
    </interactant>
    <organismsDiffer>false</organismsDiffer>
    <experiments>3</experiments>
</comment>
<comment type="interaction">
    <interactant intactId="EBI-10829018">
        <id>Q04864-2</id>
    </interactant>
    <interactant intactId="EBI-395261">
        <id>P24863</id>
        <label>CCNC</label>
    </interactant>
    <organismsDiffer>false</organismsDiffer>
    <experiments>3</experiments>
</comment>
<comment type="interaction">
    <interactant intactId="EBI-10829018">
        <id>Q04864-2</id>
    </interactant>
    <interactant intactId="EBI-746238">
        <id>Q07002</id>
        <label>CDK18</label>
    </interactant>
    <organismsDiffer>false</organismsDiffer>
    <experiments>3</experiments>
</comment>
<comment type="interaction">
    <interactant intactId="EBI-10829018">
        <id>Q04864-2</id>
    </interactant>
    <interactant intactId="EBI-375077">
        <id>P38936</id>
        <label>CDKN1A</label>
    </interactant>
    <organismsDiffer>false</organismsDiffer>
    <experiments>3</experiments>
</comment>
<comment type="interaction">
    <interactant intactId="EBI-10829018">
        <id>Q04864-2</id>
    </interactant>
    <interactant intactId="EBI-711290">
        <id>P42773</id>
        <label>CDKN2C</label>
    </interactant>
    <organismsDiffer>false</organismsDiffer>
    <experiments>3</experiments>
</comment>
<comment type="interaction">
    <interactant intactId="EBI-10829018">
        <id>Q04864-2</id>
    </interactant>
    <interactant intactId="EBI-745859">
        <id>P55273</id>
        <label>CDKN2D</label>
    </interactant>
    <organismsDiffer>false</organismsDiffer>
    <experiments>3</experiments>
</comment>
<comment type="interaction">
    <interactant intactId="EBI-10829018">
        <id>Q04864-2</id>
    </interactant>
    <interactant intactId="EBI-11063830">
        <id>Q86X02</id>
        <label>CDR2L</label>
    </interactant>
    <organismsDiffer>false</organismsDiffer>
    <experiments>3</experiments>
</comment>
<comment type="interaction">
    <interactant intactId="EBI-10829018">
        <id>Q04864-2</id>
    </interactant>
    <interactant intactId="EBI-741885">
        <id>Q96LK0</id>
        <label>CEP19</label>
    </interactant>
    <organismsDiffer>false</organismsDiffer>
    <experiments>3</experiments>
</comment>
<comment type="interaction">
    <interactant intactId="EBI-10829018">
        <id>Q04864-2</id>
    </interactant>
    <interactant intactId="EBI-749051">
        <id>Q8IYR0</id>
        <label>CFAP206</label>
    </interactant>
    <organismsDiffer>false</organismsDiffer>
    <experiments>3</experiments>
</comment>
<comment type="interaction">
    <interactant intactId="EBI-10829018">
        <id>Q04864-2</id>
    </interactant>
    <interactant intactId="EBI-723153">
        <id>Q9UFW8</id>
        <label>CGGBP1</label>
    </interactant>
    <organismsDiffer>false</organismsDiffer>
    <experiments>3</experiments>
</comment>
<comment type="interaction">
    <interactant intactId="EBI-10829018">
        <id>Q04864-2</id>
    </interactant>
    <interactant intactId="EBI-1020839">
        <id>Q13111</id>
        <label>CHAF1A</label>
    </interactant>
    <organismsDiffer>false</organismsDiffer>
    <experiments>3</experiments>
</comment>
<comment type="interaction">
    <interactant intactId="EBI-10829018">
        <id>Q04864-2</id>
    </interactant>
    <interactant intactId="EBI-741528">
        <id>Q9UKJ5</id>
        <label>CHIC2</label>
    </interactant>
    <organismsDiffer>false</organismsDiffer>
    <experiments>3</experiments>
</comment>
<comment type="interaction">
    <interactant intactId="EBI-10829018">
        <id>Q04864-2</id>
    </interactant>
    <interactant intactId="EBI-739784">
        <id>Q9BW66</id>
        <label>CINP</label>
    </interactant>
    <organismsDiffer>false</organismsDiffer>
    <experiments>3</experiments>
</comment>
<comment type="interaction">
    <interactant intactId="EBI-10829018">
        <id>Q04864-2</id>
    </interactant>
    <interactant intactId="EBI-2683569">
        <id>P30622</id>
        <label>CLIP1</label>
    </interactant>
    <organismsDiffer>false</organismsDiffer>
    <experiments>3</experiments>
</comment>
<comment type="interaction">
    <interactant intactId="EBI-10829018">
        <id>Q04864-2</id>
    </interactant>
    <interactant intactId="EBI-7097057">
        <id>Q96FN4</id>
        <label>CPNE2</label>
    </interactant>
    <organismsDiffer>false</organismsDiffer>
    <experiments>3</experiments>
</comment>
<comment type="interaction">
    <interactant intactId="EBI-10829018">
        <id>Q04864-2</id>
    </interactant>
    <interactant intactId="EBI-12012272">
        <id>Q9UBL6-2</id>
        <label>CPNE7</label>
    </interactant>
    <organismsDiffer>false</organismsDiffer>
    <experiments>3</experiments>
</comment>
<comment type="interaction">
    <interactant intactId="EBI-10829018">
        <id>Q04864-2</id>
    </interactant>
    <interactant intactId="EBI-347804">
        <id>P68400</id>
        <label>CSNK2A1</label>
    </interactant>
    <organismsDiffer>false</organismsDiffer>
    <experiments>3</experiments>
</comment>
<comment type="interaction">
    <interactant intactId="EBI-10829018">
        <id>Q04864-2</id>
    </interactant>
    <interactant intactId="EBI-11962928">
        <id>Q9UI47-2</id>
        <label>CTNNA3</label>
    </interactant>
    <organismsDiffer>false</organismsDiffer>
    <experiments>3</experiments>
</comment>
<comment type="interaction">
    <interactant intactId="EBI-10829018">
        <id>Q04864-2</id>
    </interactant>
    <interactant intactId="EBI-12102608">
        <id>Q6BCY4-2</id>
        <label>CYB5R2</label>
    </interactant>
    <organismsDiffer>false</organismsDiffer>
    <experiments>3</experiments>
</comment>
<comment type="interaction">
    <interactant intactId="EBI-10829018">
        <id>Q04864-2</id>
    </interactant>
    <interactant intactId="EBI-351257">
        <id>P26196</id>
        <label>DDX6</label>
    </interactant>
    <organismsDiffer>false</organismsDiffer>
    <experiments>3</experiments>
</comment>
<comment type="interaction">
    <interactant intactId="EBI-10829018">
        <id>Q04864-2</id>
    </interactant>
    <interactant intactId="EBI-745369">
        <id>Q9H4E7</id>
        <label>DEF6</label>
    </interactant>
    <organismsDiffer>false</organismsDiffer>
    <experiments>3</experiments>
</comment>
<comment type="interaction">
    <interactant intactId="EBI-10829018">
        <id>Q04864-2</id>
    </interactant>
    <interactant intactId="EBI-741925">
        <id>P49366</id>
        <label>DHPS</label>
    </interactant>
    <organismsDiffer>false</organismsDiffer>
    <experiments>3</experiments>
</comment>
<comment type="interaction">
    <interactant intactId="EBI-10829018">
        <id>Q04864-2</id>
    </interactant>
    <interactant intactId="EBI-9679045">
        <id>Q9NQL9</id>
        <label>DMRT3</label>
    </interactant>
    <organismsDiffer>false</organismsDiffer>
    <experiments>3</experiments>
</comment>
<comment type="interaction">
    <interactant intactId="EBI-10829018">
        <id>Q04864-2</id>
    </interactant>
    <interactant intactId="EBI-743105">
        <id>Q5JVL4</id>
        <label>EFHC1</label>
    </interactant>
    <organismsDiffer>false</organismsDiffer>
    <experiments>6</experiments>
</comment>
<comment type="interaction">
    <interactant intactId="EBI-10829018">
        <id>Q04864-2</id>
    </interactant>
    <interactant intactId="EBI-2339219">
        <id>Q08426</id>
        <label>EHHADH</label>
    </interactant>
    <organismsDiffer>false</organismsDiffer>
    <experiments>3</experiments>
</comment>
<comment type="interaction">
    <interactant intactId="EBI-10829018">
        <id>Q04864-2</id>
    </interactant>
    <interactant intactId="EBI-299104">
        <id>P38919</id>
        <label>EIF4A3</label>
    </interactant>
    <organismsDiffer>false</organismsDiffer>
    <experiments>3</experiments>
</comment>
<comment type="interaction">
    <interactant intactId="EBI-10829018">
        <id>Q04864-2</id>
    </interactant>
    <interactant intactId="EBI-74090">
        <id>Q13541</id>
        <label>EIF4EBP1</label>
    </interactant>
    <organismsDiffer>false</organismsDiffer>
    <experiments>3</experiments>
</comment>
<comment type="interaction">
    <interactant intactId="EBI-10829018">
        <id>Q04864-2</id>
    </interactant>
    <interactant intactId="EBI-373150">
        <id>P63241</id>
        <label>EIF5A</label>
    </interactant>
    <organismsDiffer>false</organismsDiffer>
    <experiments>3</experiments>
</comment>
<comment type="interaction">
    <interactant intactId="EBI-10829018">
        <id>Q04864-2</id>
    </interactant>
    <interactant intactId="EBI-748028">
        <id>Q9GZV4</id>
        <label>EIF5A2</label>
    </interactant>
    <organismsDiffer>false</organismsDiffer>
    <experiments>3</experiments>
</comment>
<comment type="interaction">
    <interactant intactId="EBI-10829018">
        <id>Q04864-2</id>
    </interactant>
    <interactant intactId="EBI-489887">
        <id>P50402</id>
        <label>EMD</label>
    </interactant>
    <organismsDiffer>false</organismsDiffer>
    <experiments>3</experiments>
</comment>
<comment type="interaction">
    <interactant intactId="EBI-10829018">
        <id>Q04864-2</id>
    </interactant>
    <interactant intactId="EBI-10182490">
        <id>O15197-2</id>
        <label>EPHB6</label>
    </interactant>
    <organismsDiffer>false</organismsDiffer>
    <experiments>3</experiments>
</comment>
<comment type="interaction">
    <interactant intactId="EBI-10829018">
        <id>Q04864-2</id>
    </interactant>
    <interactant intactId="EBI-372412">
        <id>P11474</id>
        <label>ESRRA</label>
    </interactant>
    <organismsDiffer>false</organismsDiffer>
    <experiments>3</experiments>
</comment>
<comment type="interaction">
    <interactant intactId="EBI-10829018">
        <id>Q04864-2</id>
    </interactant>
    <interactant intactId="EBI-12001340">
        <id>P62508-3</id>
        <label>ESRRG</label>
    </interactant>
    <organismsDiffer>false</organismsDiffer>
    <experiments>3</experiments>
</comment>
<comment type="interaction">
    <interactant intactId="EBI-10829018">
        <id>Q04864-2</id>
    </interactant>
    <interactant intactId="EBI-371892">
        <id>Q9Y3B2</id>
        <label>EXOSC1</label>
    </interactant>
    <organismsDiffer>false</organismsDiffer>
    <experiments>3</experiments>
</comment>
<comment type="interaction">
    <interactant intactId="EBI-10829018">
        <id>Q04864-2</id>
    </interactant>
    <interactant intactId="EBI-371876">
        <id>Q9NQT4</id>
        <label>EXOSC5</label>
    </interactant>
    <organismsDiffer>false</organismsDiffer>
    <experiments>3</experiments>
</comment>
<comment type="interaction">
    <interactant intactId="EBI-10829018">
        <id>Q04864-2</id>
    </interactant>
    <interactant intactId="EBI-12013806">
        <id>Q6NZ36-4</id>
        <label>FAAP20</label>
    </interactant>
    <organismsDiffer>false</organismsDiffer>
    <experiments>3</experiments>
</comment>
<comment type="interaction">
    <interactant intactId="EBI-10829018">
        <id>Q04864-2</id>
    </interactant>
    <interactant intactId="EBI-7186123">
        <id>Q8IZ13</id>
        <label>FAM200C</label>
    </interactant>
    <organismsDiffer>false</organismsDiffer>
    <experiments>3</experiments>
</comment>
<comment type="interaction">
    <interactant intactId="EBI-10829018">
        <id>Q04864-2</id>
    </interactant>
    <interactant intactId="EBI-6658203">
        <id>Q86YD7</id>
        <label>FAM90A1</label>
    </interactant>
    <organismsDiffer>false</organismsDiffer>
    <experiments>3</experiments>
</comment>
<comment type="interaction">
    <interactant intactId="EBI-10829018">
        <id>Q04864-2</id>
    </interactant>
    <interactant intactId="EBI-11998976">
        <id>P68106-2</id>
        <label>FKBP1B</label>
    </interactant>
    <organismsDiffer>false</organismsDiffer>
    <experiments>3</experiments>
</comment>
<comment type="interaction">
    <interactant intactId="EBI-10829018">
        <id>Q04864-2</id>
    </interactant>
    <interactant intactId="EBI-11526128">
        <id>Q8NFF5-2</id>
        <label>FLAD1</label>
    </interactant>
    <organismsDiffer>false</organismsDiffer>
    <experiments>3</experiments>
</comment>
<comment type="interaction">
    <interactant intactId="EBI-10829018">
        <id>Q04864-2</id>
    </interactant>
    <interactant intactId="EBI-10242151">
        <id>Q53EP0-3</id>
        <label>FNDC3B</label>
    </interactant>
    <organismsDiffer>false</organismsDiffer>
    <experiments>3</experiments>
</comment>
<comment type="interaction">
    <interactant intactId="EBI-10829018">
        <id>Q04864-2</id>
    </interactant>
    <interactant intactId="EBI-748515">
        <id>Q8IVS8</id>
        <label>GLYCTK</label>
    </interactant>
    <organismsDiffer>false</organismsDiffer>
    <experiments>3</experiments>
</comment>
<comment type="interaction">
    <interactant intactId="EBI-10829018">
        <id>Q04864-2</id>
    </interactant>
    <interactant intactId="EBI-746309">
        <id>Q92917</id>
        <label>GPKOW</label>
    </interactant>
    <organismsDiffer>false</organismsDiffer>
    <experiments>3</experiments>
</comment>
<comment type="interaction">
    <interactant intactId="EBI-10829018">
        <id>Q04864-2</id>
    </interactant>
    <interactant intactId="EBI-2847510">
        <id>Q13588</id>
        <label>GRAP</label>
    </interactant>
    <organismsDiffer>false</organismsDiffer>
    <experiments>3</experiments>
</comment>
<comment type="interaction">
    <interactant intactId="EBI-10829018">
        <id>Q04864-2</id>
    </interactant>
    <interactant intactId="EBI-2339359">
        <id>O14929</id>
        <label>HAT1</label>
    </interactant>
    <organismsDiffer>false</organismsDiffer>
    <experiments>3</experiments>
</comment>
<comment type="interaction">
    <interactant intactId="EBI-10829018">
        <id>Q04864-2</id>
    </interactant>
    <interactant intactId="EBI-12094670">
        <id>Q8WUI4-6</id>
        <label>HDAC7</label>
    </interactant>
    <organismsDiffer>false</organismsDiffer>
    <experiments>3</experiments>
</comment>
<comment type="interaction">
    <interactant intactId="EBI-10829018">
        <id>Q04864-2</id>
    </interactant>
    <interactant intactId="EBI-352986">
        <id>P52597</id>
        <label>HNRNPF</label>
    </interactant>
    <organismsDiffer>false</organismsDiffer>
    <experiments>3</experiments>
</comment>
<comment type="interaction">
    <interactant intactId="EBI-10829018">
        <id>Q04864-2</id>
    </interactant>
    <interactant intactId="EBI-742664">
        <id>Q9BPX1</id>
        <label>HSD17B14</label>
    </interactant>
    <organismsDiffer>false</organismsDiffer>
    <experiments>3</experiments>
</comment>
<comment type="interaction">
    <interactant intactId="EBI-10829018">
        <id>Q04864-2</id>
    </interactant>
    <interactant intactId="EBI-739361">
        <id>Q9UBY9</id>
        <label>HSPB7</label>
    </interactant>
    <organismsDiffer>false</organismsDiffer>
    <experiments>3</experiments>
</comment>
<comment type="interaction">
    <interactant intactId="EBI-10829018">
        <id>Q04864-2</id>
    </interactant>
    <interactant intactId="EBI-465156">
        <id>Q9UBH0</id>
        <label>IL36RN</label>
    </interactant>
    <organismsDiffer>false</organismsDiffer>
    <experiments>3</experiments>
</comment>
<comment type="interaction">
    <interactant intactId="EBI-10829018">
        <id>Q04864-2</id>
    </interactant>
    <interactant intactId="EBI-2511344">
        <id>Q8NC69</id>
        <label>KCTD6</label>
    </interactant>
    <organismsDiffer>false</organismsDiffer>
    <experiments>3</experiments>
</comment>
<comment type="interaction">
    <interactant intactId="EBI-10829018">
        <id>Q04864-2</id>
    </interactant>
    <interactant intactId="EBI-11954971">
        <id>Q96MP8-2</id>
        <label>KCTD7</label>
    </interactant>
    <organismsDiffer>false</organismsDiffer>
    <experiments>3</experiments>
</comment>
<comment type="interaction">
    <interactant intactId="EBI-10829018">
        <id>Q04864-2</id>
    </interactant>
    <interactant intactId="EBI-739890">
        <id>Q9P2K6</id>
        <label>KLHL42</label>
    </interactant>
    <organismsDiffer>false</organismsDiffer>
    <experiments>3</experiments>
</comment>
<comment type="interaction">
    <interactant intactId="EBI-10829018">
        <id>Q04864-2</id>
    </interactant>
    <interactant intactId="EBI-739909">
        <id>Q969R5</id>
        <label>L3MBTL2</label>
    </interactant>
    <organismsDiffer>false</organismsDiffer>
    <experiments>3</experiments>
</comment>
<comment type="interaction">
    <interactant intactId="EBI-10829018">
        <id>Q04864-2</id>
    </interactant>
    <interactant intactId="EBI-726510">
        <id>Q96BZ8</id>
        <label>LENG1</label>
    </interactant>
    <organismsDiffer>false</organismsDiffer>
    <experiments>4</experiments>
</comment>
<comment type="interaction">
    <interactant intactId="EBI-10829018">
        <id>Q04864-2</id>
    </interactant>
    <interactant intactId="EBI-77889">
        <id>Q9UI95</id>
        <label>MAD2L2</label>
    </interactant>
    <organismsDiffer>false</organismsDiffer>
    <experiments>3</experiments>
</comment>
<comment type="interaction">
    <interactant intactId="EBI-10829018">
        <id>Q04864-2</id>
    </interactant>
    <interactant intactId="EBI-746778">
        <id>Q96A72</id>
        <label>MAGOHB</label>
    </interactant>
    <organismsDiffer>false</organismsDiffer>
    <experiments>3</experiments>
</comment>
<comment type="interaction">
    <interactant intactId="EBI-10829018">
        <id>Q04864-2</id>
    </interactant>
    <interactant intactId="EBI-726739">
        <id>Q9UPY8</id>
        <label>MAPRE3</label>
    </interactant>
    <organismsDiffer>false</organismsDiffer>
    <experiments>3</experiments>
</comment>
<comment type="interaction">
    <interactant intactId="EBI-10829018">
        <id>Q04864-2</id>
    </interactant>
    <interactant intactId="EBI-11323212">
        <id>Q8IYB1</id>
        <label>MB21D2</label>
    </interactant>
    <organismsDiffer>false</organismsDiffer>
    <experiments>3</experiments>
</comment>
<comment type="interaction">
    <interactant intactId="EBI-10829018">
        <id>Q04864-2</id>
    </interactant>
    <interactant intactId="EBI-11978579">
        <id>O95983-2</id>
        <label>MBD3</label>
    </interactant>
    <organismsDiffer>false</organismsDiffer>
    <experiments>3</experiments>
</comment>
<comment type="interaction">
    <interactant intactId="EBI-10829018">
        <id>Q04864-2</id>
    </interactant>
    <interactant intactId="EBI-12022316">
        <id>Q9BUN1</id>
        <label>MENT</label>
    </interactant>
    <organismsDiffer>false</organismsDiffer>
    <experiments>3</experiments>
</comment>
<comment type="interaction">
    <interactant intactId="EBI-10829018">
        <id>Q04864-2</id>
    </interactant>
    <interactant intactId="EBI-10172526">
        <id>Q9UJV3-2</id>
        <label>MID2</label>
    </interactant>
    <organismsDiffer>false</organismsDiffer>
    <experiments>3</experiments>
</comment>
<comment type="interaction">
    <interactant intactId="EBI-10829018">
        <id>Q04864-2</id>
    </interactant>
    <interactant intactId="EBI-6137472">
        <id>Q9BRT3</id>
        <label>MIEN1</label>
    </interactant>
    <organismsDiffer>false</organismsDiffer>
    <experiments>3</experiments>
</comment>
<comment type="interaction">
    <interactant intactId="EBI-10829018">
        <id>Q04864-2</id>
    </interactant>
    <interactant intactId="EBI-2548751">
        <id>Q8TD10</id>
        <label>MIPOL1</label>
    </interactant>
    <organismsDiffer>false</organismsDiffer>
    <experiments>3</experiments>
</comment>
<comment type="interaction">
    <interactant intactId="EBI-10829018">
        <id>Q04864-2</id>
    </interactant>
    <interactant intactId="EBI-1033518">
        <id>P08253</id>
        <label>MMP2</label>
    </interactant>
    <organismsDiffer>false</organismsDiffer>
    <experiments>3</experiments>
</comment>
<comment type="interaction">
    <interactant intactId="EBI-10829018">
        <id>Q04864-2</id>
    </interactant>
    <interactant intactId="EBI-399257">
        <id>Q15014</id>
        <label>MORF4L2</label>
    </interactant>
    <organismsDiffer>false</organismsDiffer>
    <experiments>3</experiments>
</comment>
<comment type="interaction">
    <interactant intactId="EBI-10829018">
        <id>Q04864-2</id>
    </interactant>
    <interactant intactId="EBI-10699187">
        <id>Q8IXL7-2</id>
        <label>MSRB3</label>
    </interactant>
    <organismsDiffer>false</organismsDiffer>
    <experiments>3</experiments>
</comment>
<comment type="interaction">
    <interactant intactId="EBI-10829018">
        <id>Q04864-2</id>
    </interactant>
    <interactant intactId="EBI-11980301">
        <id>Q8N3F0</id>
        <label>MTURN</label>
    </interactant>
    <organismsDiffer>false</organismsDiffer>
    <experiments>3</experiments>
</comment>
<comment type="interaction">
    <interactant intactId="EBI-10829018">
        <id>Q04864-2</id>
    </interactant>
    <interactant intactId="EBI-7950783">
        <id>Q96JP2</id>
        <label>MYO15B</label>
    </interactant>
    <organismsDiffer>false</organismsDiffer>
    <experiments>3</experiments>
</comment>
<comment type="interaction">
    <interactant intactId="EBI-10829018">
        <id>Q04864-2</id>
    </interactant>
    <interactant intactId="EBI-2889252">
        <id>Q96AH0</id>
        <label>NABP1</label>
    </interactant>
    <organismsDiffer>false</organismsDiffer>
    <experiments>3</experiments>
</comment>
<comment type="interaction">
    <interactant intactId="EBI-10829018">
        <id>Q04864-2</id>
    </interactant>
    <interactant intactId="EBI-713635">
        <id>O43639</id>
        <label>NCK2</label>
    </interactant>
    <organismsDiffer>false</organismsDiffer>
    <experiments>3</experiments>
</comment>
<comment type="interaction">
    <interactant intactId="EBI-10829018">
        <id>Q04864-2</id>
    </interactant>
    <interactant intactId="EBI-10281234">
        <id>Q969S2</id>
        <label>NEIL2</label>
    </interactant>
    <organismsDiffer>false</organismsDiffer>
    <experiments>3</experiments>
</comment>
<comment type="interaction">
    <interactant intactId="EBI-10829018">
        <id>Q04864-2</id>
    </interactant>
    <interactant intactId="EBI-10311409">
        <id>Q9NPG2</id>
        <label>NGB</label>
    </interactant>
    <organismsDiffer>false</organismsDiffer>
    <experiments>3</experiments>
</comment>
<comment type="interaction">
    <interactant intactId="EBI-10829018">
        <id>Q04864-2</id>
    </interactant>
    <interactant intactId="EBI-10315485">
        <id>Q9NWW6</id>
        <label>NMRK1</label>
    </interactant>
    <organismsDiffer>false</organismsDiffer>
    <experiments>3</experiments>
</comment>
<comment type="interaction">
    <interactant intactId="EBI-10829018">
        <id>Q04864-2</id>
    </interactant>
    <interactant intactId="EBI-12025760">
        <id>Q86UR1-2</id>
        <label>NOXA1</label>
    </interactant>
    <organismsDiffer>false</organismsDiffer>
    <experiments>3</experiments>
</comment>
<comment type="interaction">
    <interactant intactId="EBI-10829018">
        <id>Q04864-2</id>
    </interactant>
    <interactant intactId="EBI-10260040">
        <id>Q86WQ0</id>
        <label>NR2C2AP</label>
    </interactant>
    <organismsDiffer>false</organismsDiffer>
    <experiments>3</experiments>
</comment>
<comment type="interaction">
    <interactant intactId="EBI-10829018">
        <id>Q04864-2</id>
    </interactant>
    <interactant intactId="EBI-726826">
        <id>Q8NFP7</id>
        <label>NUDT10</label>
    </interactant>
    <organismsDiffer>false</organismsDiffer>
    <experiments>3</experiments>
</comment>
<comment type="interaction">
    <interactant intactId="EBI-10829018">
        <id>Q04864-2</id>
    </interactant>
    <interactant intactId="EBI-12049527">
        <id>Q9UMX2-2</id>
        <label>OAZ3</label>
    </interactant>
    <organismsDiffer>false</organismsDiffer>
    <experiments>3</experiments>
</comment>
<comment type="interaction">
    <interactant intactId="EBI-10829018">
        <id>Q04864-2</id>
    </interactant>
    <interactant intactId="EBI-9057006">
        <id>Q9UJX0</id>
        <label>OSGIN1</label>
    </interactant>
    <organismsDiffer>false</organismsDiffer>
    <experiments>3</experiments>
</comment>
<comment type="interaction">
    <interactant intactId="EBI-10829018">
        <id>Q04864-2</id>
    </interactant>
    <interactant intactId="EBI-746259">
        <id>Q96DC9</id>
        <label>OTUB2</label>
    </interactant>
    <organismsDiffer>false</organismsDiffer>
    <experiments>3</experiments>
</comment>
<comment type="interaction">
    <interactant intactId="EBI-10829018">
        <id>Q04864-2</id>
    </interactant>
    <interactant intactId="EBI-10488185">
        <id>Q9ULW8</id>
        <label>PADI3</label>
    </interactant>
    <organismsDiffer>false</organismsDiffer>
    <experiments>3</experiments>
</comment>
<comment type="interaction">
    <interactant intactId="EBI-10829018">
        <id>Q04864-2</id>
    </interactant>
    <interactant intactId="EBI-16431731">
        <id>A0A0S2Z5D3</id>
        <label>PAK1IP1</label>
    </interactant>
    <organismsDiffer>false</organismsDiffer>
    <experiments>3</experiments>
</comment>
<comment type="interaction">
    <interactant intactId="EBI-10829018">
        <id>Q04864-2</id>
    </interactant>
    <interactant intactId="EBI-3921217">
        <id>Q9HBI0</id>
        <label>PARVG</label>
    </interactant>
    <organismsDiffer>false</organismsDiffer>
    <experiments>3</experiments>
</comment>
<comment type="interaction">
    <interactant intactId="EBI-10829018">
        <id>Q04864-2</id>
    </interactant>
    <interactant intactId="EBI-750317">
        <id>Q99447</id>
        <label>PCYT2</label>
    </interactant>
    <organismsDiffer>false</organismsDiffer>
    <experiments>3</experiments>
</comment>
<comment type="interaction">
    <interactant intactId="EBI-10829018">
        <id>Q04864-2</id>
    </interactant>
    <interactant intactId="EBI-448407">
        <id>Q9HAT8</id>
        <label>PELI2</label>
    </interactant>
    <organismsDiffer>false</organismsDiffer>
    <experiments>3</experiments>
</comment>
<comment type="interaction">
    <interactant intactId="EBI-10829018">
        <id>Q04864-2</id>
    </interactant>
    <interactant intactId="EBI-10310808">
        <id>Q9HCN3</id>
        <label>PGAP6</label>
    </interactant>
    <organismsDiffer>false</organismsDiffer>
    <experiments>3</experiments>
</comment>
<comment type="interaction">
    <interactant intactId="EBI-10829018">
        <id>Q04864-2</id>
    </interactant>
    <interactant intactId="EBI-79165">
        <id>Q9NRD5</id>
        <label>PICK1</label>
    </interactant>
    <organismsDiffer>false</organismsDiffer>
    <experiments>3</experiments>
</comment>
<comment type="interaction">
    <interactant intactId="EBI-10829018">
        <id>Q04864-2</id>
    </interactant>
    <interactant intactId="EBI-12014286">
        <id>Q494U1-3</id>
        <label>PLEKHN1</label>
    </interactant>
    <organismsDiffer>false</organismsDiffer>
    <experiments>3</experiments>
</comment>
<comment type="interaction">
    <interactant intactId="EBI-10829018">
        <id>Q04864-2</id>
    </interactant>
    <interactant intactId="EBI-11339910">
        <id>Q8IYS1</id>
        <label>PM20D2</label>
    </interactant>
    <organismsDiffer>false</organismsDiffer>
    <experiments>3</experiments>
</comment>
<comment type="interaction">
    <interactant intactId="EBI-10829018">
        <id>Q04864-2</id>
    </interactant>
    <interactant intactId="EBI-359527">
        <id>P62875</id>
        <label>POLR2L</label>
    </interactant>
    <organismsDiffer>false</organismsDiffer>
    <experiments>3</experiments>
</comment>
<comment type="interaction">
    <interactant intactId="EBI-10829018">
        <id>Q04864-2</id>
    </interactant>
    <interactant intactId="EBI-1383852">
        <id>P54646</id>
        <label>PRKAA2</label>
    </interactant>
    <organismsDiffer>false</organismsDiffer>
    <experiments>4</experiments>
</comment>
<comment type="interaction">
    <interactant intactId="EBI-10829018">
        <id>Q04864-2</id>
    </interactant>
    <interactant intactId="EBI-1053424">
        <id>O43741</id>
        <label>PRKAB2</label>
    </interactant>
    <organismsDiffer>false</organismsDiffer>
    <experiments>4</experiments>
</comment>
<comment type="interaction">
    <interactant intactId="EBI-10829018">
        <id>Q04864-2</id>
    </interactant>
    <interactant intactId="EBI-1567797">
        <id>Q8WWY3</id>
        <label>PRPF31</label>
    </interactant>
    <organismsDiffer>false</organismsDiffer>
    <experiments>3</experiments>
</comment>
<comment type="interaction">
    <interactant intactId="EBI-10829018">
        <id>Q04864-2</id>
    </interactant>
    <interactant intactId="EBI-359310">
        <id>P25789</id>
        <label>PSMA4</label>
    </interactant>
    <organismsDiffer>false</organismsDiffer>
    <experiments>3</experiments>
</comment>
<comment type="interaction">
    <interactant intactId="EBI-10829018">
        <id>Q04864-2</id>
    </interactant>
    <interactant intactId="EBI-372312">
        <id>P28062-2</id>
        <label>PSMB8</label>
    </interactant>
    <organismsDiffer>false</organismsDiffer>
    <experiments>3</experiments>
</comment>
<comment type="interaction">
    <interactant intactId="EBI-10829018">
        <id>Q04864-2</id>
    </interactant>
    <interactant intactId="EBI-11974061">
        <id>Q9UIG4</id>
        <label>PSORS1C2</label>
    </interactant>
    <organismsDiffer>false</organismsDiffer>
    <experiments>3</experiments>
</comment>
<comment type="interaction">
    <interactant intactId="EBI-10829018">
        <id>Q04864-2</id>
    </interactant>
    <interactant intactId="EBI-347462">
        <id>P47897</id>
        <label>QARS1</label>
    </interactant>
    <organismsDiffer>false</organismsDiffer>
    <experiments>3</experiments>
</comment>
<comment type="interaction">
    <interactant intactId="EBI-10829018">
        <id>Q04864-2</id>
    </interactant>
    <interactant intactId="EBI-372165">
        <id>O14966</id>
        <label>RAB29</label>
    </interactant>
    <organismsDiffer>false</organismsDiffer>
    <experiments>3</experiments>
</comment>
<comment type="interaction">
    <interactant intactId="EBI-10829018">
        <id>Q04864-2</id>
    </interactant>
    <interactant intactId="EBI-746453">
        <id>P54725</id>
        <label>RAD23A</label>
    </interactant>
    <organismsDiffer>false</organismsDiffer>
    <experiments>3</experiments>
</comment>
<comment type="interaction">
    <interactant intactId="EBI-10829018">
        <id>Q04864-2</id>
    </interactant>
    <interactant intactId="EBI-1055693">
        <id>O75771</id>
        <label>RAD51D</label>
    </interactant>
    <organismsDiffer>false</organismsDiffer>
    <experiments>3</experiments>
</comment>
<comment type="interaction">
    <interactant intactId="EBI-10829018">
        <id>Q04864-2</id>
    </interactant>
    <interactant intactId="EBI-16428950">
        <id>A0A0S2Z4G9</id>
        <label>RNF6</label>
    </interactant>
    <organismsDiffer>false</organismsDiffer>
    <experiments>3</experiments>
</comment>
<comment type="interaction">
    <interactant intactId="EBI-10829018">
        <id>Q04864-2</id>
    </interactant>
    <interactant intactId="EBI-10174072">
        <id>A6ZKI3</id>
        <label>RTL8C</label>
    </interactant>
    <organismsDiffer>false</organismsDiffer>
    <experiments>3</experiments>
</comment>
<comment type="interaction">
    <interactant intactId="EBI-10829018">
        <id>Q04864-2</id>
    </interactant>
    <interactant intactId="EBI-11984663">
        <id>Q06455-2</id>
        <label>RUNX1T1</label>
    </interactant>
    <organismsDiffer>false</organismsDiffer>
    <experiments>3</experiments>
</comment>
<comment type="interaction">
    <interactant intactId="EBI-10829018">
        <id>Q04864-2</id>
    </interactant>
    <interactant intactId="EBI-16435788">
        <id>Q5T7Y4</id>
        <label>S100A1</label>
    </interactant>
    <organismsDiffer>false</organismsDiffer>
    <experiments>3</experiments>
</comment>
<comment type="interaction">
    <interactant intactId="EBI-10829018">
        <id>Q04864-2</id>
    </interactant>
    <interactant intactId="EBI-14067109">
        <id>Q96NU1</id>
        <label>SAMD11</label>
    </interactant>
    <organismsDiffer>false</organismsDiffer>
    <experiments>3</experiments>
</comment>
<comment type="interaction">
    <interactant intactId="EBI-10829018">
        <id>Q04864-2</id>
    </interactant>
    <interactant intactId="EBI-748391">
        <id>Q9BWG6</id>
        <label>SCNM1</label>
    </interactant>
    <organismsDiffer>false</organismsDiffer>
    <experiments>3</experiments>
</comment>
<comment type="interaction">
    <interactant intactId="EBI-10829018">
        <id>Q04864-2</id>
    </interactant>
    <interactant intactId="EBI-10320311">
        <id>Q9UDX3</id>
        <label>SEC14L4</label>
    </interactant>
    <organismsDiffer>false</organismsDiffer>
    <experiments>3</experiments>
</comment>
<comment type="interaction">
    <interactant intactId="EBI-10829018">
        <id>Q04864-2</id>
    </interactant>
    <interactant intactId="EBI-79084">
        <id>Q92529</id>
        <label>SHC3</label>
    </interactant>
    <organismsDiffer>false</organismsDiffer>
    <experiments>3</experiments>
</comment>
<comment type="interaction">
    <interactant intactId="EBI-10829018">
        <id>Q04864-2</id>
    </interactant>
    <interactant intactId="EBI-743675">
        <id>Q15475</id>
        <label>SIX1</label>
    </interactant>
    <organismsDiffer>false</organismsDiffer>
    <experiments>3</experiments>
</comment>
<comment type="interaction">
    <interactant intactId="EBI-10829018">
        <id>Q04864-2</id>
    </interactant>
    <interactant intactId="EBI-2872322">
        <id>Q9H0W8</id>
        <label>SMG9</label>
    </interactant>
    <organismsDiffer>false</organismsDiffer>
    <experiments>3</experiments>
</comment>
<comment type="interaction">
    <interactant intactId="EBI-10829018">
        <id>Q04864-2</id>
    </interactant>
    <interactant intactId="EBI-9675976">
        <id>Q9BV90</id>
        <label>SNRNP25</label>
    </interactant>
    <organismsDiffer>false</organismsDiffer>
    <experiments>3</experiments>
</comment>
<comment type="interaction">
    <interactant intactId="EBI-10829018">
        <id>Q04864-2</id>
    </interactant>
    <interactant intactId="EBI-11995806">
        <id>Q9H0A9-2</id>
        <label>SPATC1L</label>
    </interactant>
    <organismsDiffer>false</organismsDiffer>
    <experiments>3</experiments>
</comment>
<comment type="interaction">
    <interactant intactId="EBI-10829018">
        <id>Q04864-2</id>
    </interactant>
    <interactant intactId="EBI-742688">
        <id>Q9NZD8</id>
        <label>SPG21</label>
    </interactant>
    <organismsDiffer>false</organismsDiffer>
    <experiments>3</experiments>
</comment>
<comment type="interaction">
    <interactant intactId="EBI-10829018">
        <id>Q04864-2</id>
    </interactant>
    <interactant intactId="EBI-3866665">
        <id>O43609</id>
        <label>SPRY1</label>
    </interactant>
    <organismsDiffer>false</organismsDiffer>
    <experiments>3</experiments>
</comment>
<comment type="interaction">
    <interactant intactId="EBI-10829018">
        <id>Q04864-2</id>
    </interactant>
    <interactant intactId="EBI-745021">
        <id>Q96FJ0</id>
        <label>STAMBPL1</label>
    </interactant>
    <organismsDiffer>false</organismsDiffer>
    <experiments>3</experiments>
</comment>
<comment type="interaction">
    <interactant intactId="EBI-10829018">
        <id>Q04864-2</id>
    </interactant>
    <interactant intactId="EBI-749295">
        <id>O75716</id>
        <label>STK16</label>
    </interactant>
    <organismsDiffer>false</organismsDiffer>
    <experiments>3</experiments>
</comment>
<comment type="interaction">
    <interactant intactId="EBI-10829018">
        <id>Q04864-2</id>
    </interactant>
    <interactant intactId="EBI-749441">
        <id>O00204</id>
        <label>SULT2B1</label>
    </interactant>
    <organismsDiffer>false</organismsDiffer>
    <experiments>3</experiments>
</comment>
<comment type="interaction">
    <interactant intactId="EBI-10829018">
        <id>Q04864-2</id>
    </interactant>
    <interactant intactId="EBI-3921347">
        <id>P51687</id>
        <label>SUOX</label>
    </interactant>
    <organismsDiffer>false</organismsDiffer>
    <experiments>3</experiments>
</comment>
<comment type="interaction">
    <interactant intactId="EBI-10829018">
        <id>Q04864-2</id>
    </interactant>
    <interactant intactId="EBI-12018146">
        <id>Q8IYX1</id>
        <label>TBC1D21</label>
    </interactant>
    <organismsDiffer>false</organismsDiffer>
    <experiments>3</experiments>
</comment>
<comment type="interaction">
    <interactant intactId="EBI-10829018">
        <id>Q04864-2</id>
    </interactant>
    <interactant intactId="EBI-8787464">
        <id>Q9NU19</id>
        <label>TBC1D22B</label>
    </interactant>
    <organismsDiffer>false</organismsDiffer>
    <experiments>3</experiments>
</comment>
<comment type="interaction">
    <interactant intactId="EBI-10829018">
        <id>Q04864-2</id>
    </interactant>
    <interactant intactId="EBI-749995">
        <id>P56279</id>
        <label>TCL1A</label>
    </interactant>
    <organismsDiffer>false</organismsDiffer>
    <experiments>3</experiments>
</comment>
<comment type="interaction">
    <interactant intactId="EBI-10829018">
        <id>Q04864-2</id>
    </interactant>
    <interactant intactId="EBI-2555179">
        <id>Q9NUJ3</id>
        <label>TCP11L1</label>
    </interactant>
    <organismsDiffer>false</organismsDiffer>
    <experiments>3</experiments>
</comment>
<comment type="interaction">
    <interactant intactId="EBI-10829018">
        <id>Q04864-2</id>
    </interactant>
    <interactant intactId="EBI-1765605">
        <id>Q96FV9</id>
        <label>THOC1</label>
    </interactant>
    <organismsDiffer>false</organismsDiffer>
    <experiments>3</experiments>
</comment>
<comment type="interaction">
    <interactant intactId="EBI-10829018">
        <id>Q04864-2</id>
    </interactant>
    <interactant intactId="EBI-3939165">
        <id>O43711</id>
        <label>TLX3</label>
    </interactant>
    <organismsDiffer>false</organismsDiffer>
    <experiments>3</experiments>
</comment>
<comment type="interaction">
    <interactant intactId="EBI-10829018">
        <id>Q04864-2</id>
    </interactant>
    <interactant intactId="EBI-11119202">
        <id>Q9UL33-2</id>
        <label>TRAPPC2L</label>
    </interactant>
    <organismsDiffer>false</organismsDiffer>
    <experiments>3</experiments>
</comment>
<comment type="interaction">
    <interactant intactId="EBI-10829018">
        <id>Q04864-2</id>
    </interactant>
    <interactant intactId="EBI-8451480">
        <id>O75865-2</id>
        <label>TRAPPC6A</label>
    </interactant>
    <organismsDiffer>false</organismsDiffer>
    <experiments>3</experiments>
</comment>
<comment type="interaction">
    <interactant intactId="EBI-10829018">
        <id>Q04864-2</id>
    </interactant>
    <interactant intactId="EBI-2130449">
        <id>Q6AZZ1</id>
        <label>TRIM68</label>
    </interactant>
    <organismsDiffer>false</organismsDiffer>
    <experiments>3</experiments>
</comment>
<comment type="interaction">
    <interactant intactId="EBI-10829018">
        <id>Q04864-2</id>
    </interactant>
    <interactant intactId="EBI-750174">
        <id>Q99576</id>
        <label>TSC22D3</label>
    </interactant>
    <organismsDiffer>false</organismsDiffer>
    <experiments>3</experiments>
</comment>
<comment type="interaction">
    <interactant intactId="EBI-10829018">
        <id>Q04864-2</id>
    </interactant>
    <interactant intactId="EBI-372432">
        <id>Q8WW01</id>
        <label>TSEN15</label>
    </interactant>
    <organismsDiffer>false</organismsDiffer>
    <experiments>3</experiments>
</comment>
<comment type="interaction">
    <interactant intactId="EBI-10829018">
        <id>Q04864-2</id>
    </interactant>
    <interactant intactId="EBI-3918381">
        <id>Q96PN8</id>
        <label>TSSK3</label>
    </interactant>
    <organismsDiffer>false</organismsDiffer>
    <experiments>3</experiments>
</comment>
<comment type="interaction">
    <interactant intactId="EBI-10829018">
        <id>Q04864-2</id>
    </interactant>
    <interactant intactId="EBI-8994397">
        <id>Q5T7W7</id>
        <label>TSTD2</label>
    </interactant>
    <organismsDiffer>false</organismsDiffer>
    <experiments>3</experiments>
</comment>
<comment type="interaction">
    <interactant intactId="EBI-10829018">
        <id>Q04864-2</id>
    </interactant>
    <interactant intactId="EBI-1380492">
        <id>Q8TF42</id>
        <label>UBASH3B</label>
    </interactant>
    <organismsDiffer>false</organismsDiffer>
    <experiments>3</experiments>
</comment>
<comment type="interaction">
    <interactant intactId="EBI-10829018">
        <id>Q04864-2</id>
    </interactant>
    <interactant intactId="EBI-745527">
        <id>Q9Y2X8</id>
        <label>UBE2D4</label>
    </interactant>
    <organismsDiffer>false</organismsDiffer>
    <experiments>3</experiments>
</comment>
<comment type="interaction">
    <interactant intactId="EBI-10829018">
        <id>Q04864-2</id>
    </interactant>
    <interactant intactId="EBI-1993627">
        <id>O94888</id>
        <label>UBXN7</label>
    </interactant>
    <organismsDiffer>false</organismsDiffer>
    <experiments>3</experiments>
</comment>
<comment type="interaction">
    <interactant intactId="EBI-10829018">
        <id>Q04864-2</id>
    </interactant>
    <interactant intactId="EBI-1182602">
        <id>Q9BYP7</id>
        <label>WNK3</label>
    </interactant>
    <organismsDiffer>false</organismsDiffer>
    <experiments>3</experiments>
</comment>
<comment type="interaction">
    <interactant intactId="EBI-10829018">
        <id>Q04864-2</id>
    </interactant>
    <interactant intactId="EBI-16435800">
        <id>A0A0S2Z4P3</id>
        <label>YARS</label>
    </interactant>
    <organismsDiffer>false</organismsDiffer>
    <experiments>3</experiments>
</comment>
<comment type="interaction">
    <interactant intactId="EBI-10829018">
        <id>Q04864-2</id>
    </interactant>
    <interactant intactId="EBI-10300345">
        <id>Q9BW85</id>
        <label>YJU2</label>
    </interactant>
    <organismsDiffer>false</organismsDiffer>
    <experiments>3</experiments>
</comment>
<comment type="interaction">
    <interactant intactId="EBI-10829018">
        <id>Q04864-2</id>
    </interactant>
    <interactant intactId="EBI-711925">
        <id>Q05516</id>
        <label>ZBTB16</label>
    </interactant>
    <organismsDiffer>false</organismsDiffer>
    <experiments>3</experiments>
</comment>
<comment type="interaction">
    <interactant intactId="EBI-10829018">
        <id>Q04864-2</id>
    </interactant>
    <interactant intactId="EBI-10254561">
        <id>Q6UX98</id>
        <label>ZDHHC24</label>
    </interactant>
    <organismsDiffer>false</organismsDiffer>
    <experiments>3</experiments>
</comment>
<comment type="interaction">
    <interactant intactId="EBI-10829018">
        <id>Q04864-2</id>
    </interactant>
    <interactant intactId="EBI-11963196">
        <id>Q15915</id>
        <label>ZIC1</label>
    </interactant>
    <organismsDiffer>false</organismsDiffer>
    <experiments>3</experiments>
</comment>
<comment type="interaction">
    <interactant intactId="EBI-10829018">
        <id>Q04864-2</id>
    </interactant>
    <interactant intactId="EBI-740232">
        <id>Q9NWS9-2</id>
        <label>ZNF446</label>
    </interactant>
    <organismsDiffer>false</organismsDiffer>
    <experiments>3</experiments>
</comment>
<comment type="interaction">
    <interactant intactId="EBI-10829018">
        <id>Q04864-2</id>
    </interactant>
    <interactant intactId="EBI-16429014">
        <id>A0A0S2Z5X4</id>
        <label>ZNF688</label>
    </interactant>
    <organismsDiffer>false</organismsDiffer>
    <experiments>3</experiments>
</comment>
<comment type="interaction">
    <interactant intactId="EBI-10829018">
        <id>Q04864-2</id>
    </interactant>
    <interactant intactId="EBI-16429989">
        <id>A0A0S2Z6P0</id>
        <label>ZNF688</label>
    </interactant>
    <organismsDiffer>false</organismsDiffer>
    <experiments>3</experiments>
</comment>
<comment type="interaction">
    <interactant intactId="EBI-10829018">
        <id>Q04864-2</id>
    </interactant>
    <interactant intactId="EBI-7254550">
        <id>P36508</id>
        <label>ZNF76</label>
    </interactant>
    <organismsDiffer>false</organismsDiffer>
    <experiments>3</experiments>
</comment>
<comment type="subcellular location">
    <subcellularLocation>
        <location evidence="1">Nucleus</location>
    </subcellularLocation>
</comment>
<comment type="alternative products">
    <event type="alternative splicing"/>
    <isoform>
        <id>Q04864-1</id>
        <name>1</name>
        <sequence type="displayed"/>
    </isoform>
    <isoform>
        <id>Q04864-2</id>
        <name>2</name>
        <sequence type="described" ref="VSP_055857"/>
    </isoform>
</comment>
<comment type="disease" evidence="9 10">
    <disease id="DI-06291">
        <name>Immunodeficiency 92</name>
        <acronym>IMD92</acronym>
        <description>An autosomal recessive disorder characterized by recurrent bacterial, viral, fungal, or parasitic infections appearing in infancy or early childhood. Patient lymphocytes show defects in both T- and B-cell proliferation, cytokine secretion, and overall function, and there is also evidence of dysfunction of NK, certain antigen-presenting cells, and myeloid subsets.</description>
        <dbReference type="MIM" id="619652"/>
    </disease>
    <text>The disease is caused by variants affecting the gene represented in this entry.</text>
</comment>
<comment type="online information" name="Atlas of Genetics and Cytogenetics in Oncology and Haematology">
    <link uri="https://atlasgeneticsoncology.org/gene/322/REL"/>
</comment>
<keyword id="KW-0007">Acetylation</keyword>
<keyword id="KW-0010">Activator</keyword>
<keyword id="KW-0025">Alternative splicing</keyword>
<keyword id="KW-0238">DNA-binding</keyword>
<keyword id="KW-0539">Nucleus</keyword>
<keyword id="KW-0597">Phosphoprotein</keyword>
<keyword id="KW-1267">Proteomics identification</keyword>
<keyword id="KW-0656">Proto-oncogene</keyword>
<keyword id="KW-1185">Reference proteome</keyword>
<keyword id="KW-0804">Transcription</keyword>
<keyword id="KW-0805">Transcription regulation</keyword>
<accession>Q04864</accession>
<accession>Q17RU2</accession>
<accession>Q2PNZ7</accession>
<accession>Q6LDY0</accession>
<proteinExistence type="evidence at protein level"/>
<gene>
    <name type="primary">REL</name>
</gene>
<sequence length="619" mass="68520">MASGAYNPYIEIIEQPRQRGMRFRYKCEGRSAGSIPGEHSTDNNRTYPSIQIMNYYGKGKVRITLVTKNDPYKPHPHDLVGKDCRDGYYEAEFGQERRPLFFQNLGIRCVKKKEVKEAIITRIKAGINPFNVPEKQLNDIEDCDLNVVRLCFQVFLPDEHGNLTTALPPVVSNPIYDNRAPNTAELRICRVNKNCGSVRGGDEIFLLCDKVQKDDIEVRFVLNDWEAKGIFSQADVHRQVAIVFKTPPYCKAITEPVTVKMQLRRPSDQEVSESMDFRYLPDEKDTYGNKAKKQKTTLLFQKLCQDHVETGFRHVDQDGLELLTSGDPPTLASQSAGITVNFPERPRPGLLGSIGEGRYFKKEPNLFSHDAVVREMPTGVSSQAESYYPSPGPISSGLSHHASMAPLPSSSWSSVAHPTPRSGNTNPLSSFSTRTLPSNSQGIPPFLRIPVGNDLNASNACIYNNADDIVGMEASSMPSADLYGISDPNMLSNCSVNMMTTSSDSMGETDNPRLLSMNLENPSCNSVLDPRDLRQLHQMSSSSMSAGANSNTTVFVSQSDAFEGSDFSCADNSMINESGPSNSTNPNSHGFVQDSQYSGIGSMQNEQLSDSFPYEFFQV</sequence>
<feature type="initiator methionine" description="Removed" evidence="15">
    <location>
        <position position="1"/>
    </location>
</feature>
<feature type="chain" id="PRO_0000205165" description="Proto-oncogene c-Rel">
    <location>
        <begin position="2"/>
        <end position="619"/>
    </location>
</feature>
<feature type="domain" description="RHD" evidence="3">
    <location>
        <begin position="8"/>
        <end position="297"/>
    </location>
</feature>
<feature type="region of interest" description="Disordered" evidence="4">
    <location>
        <begin position="399"/>
        <end position="437"/>
    </location>
</feature>
<feature type="region of interest" description="Disordered" evidence="4">
    <location>
        <begin position="572"/>
        <end position="593"/>
    </location>
</feature>
<feature type="short sequence motif" description="Nuclear localization signal" evidence="2">
    <location>
        <begin position="290"/>
        <end position="295"/>
    </location>
</feature>
<feature type="compositionally biased region" description="Low complexity" evidence="4">
    <location>
        <begin position="399"/>
        <end position="420"/>
    </location>
</feature>
<feature type="compositionally biased region" description="Polar residues" evidence="4">
    <location>
        <begin position="421"/>
        <end position="437"/>
    </location>
</feature>
<feature type="modified residue" description="N-acetylalanine" evidence="15">
    <location>
        <position position="2"/>
    </location>
</feature>
<feature type="modified residue" description="Phosphoserine; by PKA" evidence="2">
    <location>
        <position position="267"/>
    </location>
</feature>
<feature type="modified residue" description="Phosphoserine" evidence="5">
    <location>
        <position position="503"/>
    </location>
</feature>
<feature type="splice variant" id="VSP_055857" description="In isoform 2." evidence="14">
    <location>
        <begin position="308"/>
        <end position="339"/>
    </location>
</feature>
<name>REL_HUMAN</name>
<protein>
    <recommendedName>
        <fullName>Proto-oncogene c-Rel</fullName>
    </recommendedName>
</protein>
<dbReference type="EMBL" id="X75042">
    <property type="protein sequence ID" value="CAA52954.1"/>
    <property type="molecule type" value="mRNA"/>
</dbReference>
<dbReference type="EMBL" id="DQ314888">
    <property type="protein sequence ID" value="ABC40747.1"/>
    <property type="molecule type" value="Genomic_DNA"/>
</dbReference>
<dbReference type="EMBL" id="AC010733">
    <property type="status" value="NOT_ANNOTATED_CDS"/>
    <property type="molecule type" value="Genomic_DNA"/>
</dbReference>
<dbReference type="EMBL" id="BC117191">
    <property type="protein sequence ID" value="AAI17192.1"/>
    <property type="molecule type" value="mRNA"/>
</dbReference>
<dbReference type="EMBL" id="BC143885">
    <property type="protein sequence ID" value="AAI43886.1"/>
    <property type="molecule type" value="mRNA"/>
</dbReference>
<dbReference type="EMBL" id="M11595">
    <property type="protein sequence ID" value="AAA52073.1"/>
    <property type="molecule type" value="Genomic_DNA"/>
</dbReference>
<dbReference type="CCDS" id="CCDS1864.1">
    <molecule id="Q04864-1"/>
</dbReference>
<dbReference type="CCDS" id="CCDS74515.1">
    <molecule id="Q04864-2"/>
</dbReference>
<dbReference type="PIR" id="A60646">
    <property type="entry name" value="A60646"/>
</dbReference>
<dbReference type="RefSeq" id="NP_001278675.1">
    <molecule id="Q04864-2"/>
    <property type="nucleotide sequence ID" value="NM_001291746.2"/>
</dbReference>
<dbReference type="RefSeq" id="NP_002899.1">
    <molecule id="Q04864-1"/>
    <property type="nucleotide sequence ID" value="NM_002908.4"/>
</dbReference>
<dbReference type="SMR" id="Q04864"/>
<dbReference type="BioGRID" id="111898">
    <property type="interactions" value="383"/>
</dbReference>
<dbReference type="ComplexPortal" id="CPX-5830">
    <property type="entry name" value="NF-kappaB DNA-binding transcription factor complex, p52/c-Rel"/>
</dbReference>
<dbReference type="ComplexPortal" id="CPX-5832">
    <property type="entry name" value="NF-kappaB DNA-binding transcription factor complex, p50/c-Rel"/>
</dbReference>
<dbReference type="ComplexPortal" id="CPX-5834">
    <property type="entry name" value="NF-kappaB DNA-binding transcription factor complex, p65/c-Rel"/>
</dbReference>
<dbReference type="ComplexPortal" id="CPX-5836">
    <property type="entry name" value="NF-kappaB DNA-binding transcription factor complex, c-Rel/c-Rel"/>
</dbReference>
<dbReference type="CORUM" id="Q04864"/>
<dbReference type="DIP" id="DIP-301N"/>
<dbReference type="FunCoup" id="Q04864">
    <property type="interactions" value="1946"/>
</dbReference>
<dbReference type="IntAct" id="Q04864">
    <property type="interactions" value="340"/>
</dbReference>
<dbReference type="MINT" id="Q04864"/>
<dbReference type="STRING" id="9606.ENSP00000295025"/>
<dbReference type="ChEMBL" id="CHEMBL4296310"/>
<dbReference type="DrugBank" id="DB01822">
    <property type="generic name" value="(4R,5R)-1,2-dithiane-4,5-diol"/>
</dbReference>
<dbReference type="DrugBank" id="DB15010">
    <property type="generic name" value="Edasalonexent"/>
</dbReference>
<dbReference type="DrugBank" id="DB17029">
    <property type="generic name" value="Go-6976"/>
</dbReference>
<dbReference type="DrugBank" id="DB06685">
    <property type="generic name" value="Laquinimod"/>
</dbReference>
<dbReference type="DrugBank" id="DB13063">
    <property type="generic name" value="Parthenolide"/>
</dbReference>
<dbReference type="DrugBank" id="DB12058">
    <property type="generic name" value="Recoflavone"/>
</dbReference>
<dbReference type="DrugBank" id="DB15495">
    <property type="generic name" value="Rocaglamide"/>
</dbReference>
<dbReference type="DrugBank" id="DB00795">
    <property type="generic name" value="Sulfasalazine"/>
</dbReference>
<dbReference type="DrugBank" id="DB18804">
    <property type="generic name" value="Tepilamide fumarate"/>
</dbReference>
<dbReference type="DrugBank" id="DB12025">
    <property type="generic name" value="Triptolide"/>
</dbReference>
<dbReference type="DrugBank" id="DB06439">
    <property type="generic name" value="Tyloxapol"/>
</dbReference>
<dbReference type="DrugBank" id="DB06235">
    <property type="generic name" value="Vadimezan"/>
</dbReference>
<dbReference type="GlyCosmos" id="Q04864">
    <property type="glycosylation" value="6 sites, 2 glycans"/>
</dbReference>
<dbReference type="GlyGen" id="Q04864">
    <property type="glycosylation" value="5 sites, 2 O-linked glycans (5 sites)"/>
</dbReference>
<dbReference type="iPTMnet" id="Q04864"/>
<dbReference type="PhosphoSitePlus" id="Q04864"/>
<dbReference type="BioMuta" id="REL"/>
<dbReference type="DMDM" id="548720"/>
<dbReference type="jPOST" id="Q04864"/>
<dbReference type="MassIVE" id="Q04864"/>
<dbReference type="PaxDb" id="9606-ENSP00000295025"/>
<dbReference type="PeptideAtlas" id="Q04864"/>
<dbReference type="ProteomicsDB" id="58288">
    <molecule id="Q04864-1"/>
</dbReference>
<dbReference type="ProteomicsDB" id="61167"/>
<dbReference type="Pumba" id="Q04864"/>
<dbReference type="Antibodypedia" id="3830">
    <property type="antibodies" value="828 antibodies from 48 providers"/>
</dbReference>
<dbReference type="DNASU" id="5966"/>
<dbReference type="Ensembl" id="ENST00000295025.12">
    <molecule id="Q04864-1"/>
    <property type="protein sequence ID" value="ENSP00000295025.7"/>
    <property type="gene ID" value="ENSG00000162924.16"/>
</dbReference>
<dbReference type="Ensembl" id="ENST00000394479.4">
    <molecule id="Q04864-2"/>
    <property type="protein sequence ID" value="ENSP00000377989.4"/>
    <property type="gene ID" value="ENSG00000162924.16"/>
</dbReference>
<dbReference type="GeneID" id="5966"/>
<dbReference type="KEGG" id="hsa:5966"/>
<dbReference type="MANE-Select" id="ENST00000394479.4">
    <molecule id="Q04864-2"/>
    <property type="protein sequence ID" value="ENSP00000377989.4"/>
    <property type="RefSeq nucleotide sequence ID" value="NM_001291746.2"/>
    <property type="RefSeq protein sequence ID" value="NP_001278675.1"/>
</dbReference>
<dbReference type="UCSC" id="uc002sam.2">
    <molecule id="Q04864-1"/>
    <property type="organism name" value="human"/>
</dbReference>
<dbReference type="AGR" id="HGNC:9954"/>
<dbReference type="CTD" id="5966"/>
<dbReference type="DisGeNET" id="5966"/>
<dbReference type="GeneCards" id="REL"/>
<dbReference type="HGNC" id="HGNC:9954">
    <property type="gene designation" value="REL"/>
</dbReference>
<dbReference type="HPA" id="ENSG00000162924">
    <property type="expression patterns" value="Tissue enhanced (bone)"/>
</dbReference>
<dbReference type="MalaCards" id="REL"/>
<dbReference type="MIM" id="164910">
    <property type="type" value="gene"/>
</dbReference>
<dbReference type="MIM" id="619652">
    <property type="type" value="phenotype"/>
</dbReference>
<dbReference type="neXtProt" id="NX_Q04864"/>
<dbReference type="OpenTargets" id="ENSG00000162924"/>
<dbReference type="PharmGKB" id="PA34321"/>
<dbReference type="VEuPathDB" id="HostDB:ENSG00000162924"/>
<dbReference type="eggNOG" id="ENOG502QQS6">
    <property type="taxonomic scope" value="Eukaryota"/>
</dbReference>
<dbReference type="GeneTree" id="ENSGT00940000158732"/>
<dbReference type="HOGENOM" id="CLU_004343_5_0_1"/>
<dbReference type="InParanoid" id="Q04864"/>
<dbReference type="OMA" id="NCPVNMM"/>
<dbReference type="OrthoDB" id="7881762at2759"/>
<dbReference type="PAN-GO" id="Q04864">
    <property type="GO annotations" value="9 GO annotations based on evolutionary models"/>
</dbReference>
<dbReference type="PhylomeDB" id="Q04864"/>
<dbReference type="TreeFam" id="TF325632"/>
<dbReference type="PathwayCommons" id="Q04864"/>
<dbReference type="Reactome" id="R-HSA-1169091">
    <property type="pathway name" value="Activation of NF-kappaB in B cells"/>
</dbReference>
<dbReference type="SignaLink" id="Q04864"/>
<dbReference type="SIGNOR" id="Q04864"/>
<dbReference type="BioGRID-ORCS" id="5966">
    <property type="hits" value="13 hits in 1180 CRISPR screens"/>
</dbReference>
<dbReference type="ChiTaRS" id="REL">
    <property type="organism name" value="human"/>
</dbReference>
<dbReference type="GeneWiki" id="REL"/>
<dbReference type="GenomeRNAi" id="5966"/>
<dbReference type="Pharos" id="Q04864">
    <property type="development level" value="Tbio"/>
</dbReference>
<dbReference type="PRO" id="PR:Q04864"/>
<dbReference type="Proteomes" id="UP000005640">
    <property type="component" value="Chromosome 2"/>
</dbReference>
<dbReference type="RNAct" id="Q04864">
    <property type="molecule type" value="protein"/>
</dbReference>
<dbReference type="Bgee" id="ENSG00000162924">
    <property type="expression patterns" value="Expressed in buccal mucosa cell and 174 other cell types or tissues"/>
</dbReference>
<dbReference type="ExpressionAtlas" id="Q04864">
    <property type="expression patterns" value="baseline and differential"/>
</dbReference>
<dbReference type="GO" id="GO:0000785">
    <property type="term" value="C:chromatin"/>
    <property type="evidence" value="ECO:0000247"/>
    <property type="project" value="NTNU_SB"/>
</dbReference>
<dbReference type="GO" id="GO:0005737">
    <property type="term" value="C:cytoplasm"/>
    <property type="evidence" value="ECO:0000318"/>
    <property type="project" value="GO_Central"/>
</dbReference>
<dbReference type="GO" id="GO:0005829">
    <property type="term" value="C:cytosol"/>
    <property type="evidence" value="ECO:0000304"/>
    <property type="project" value="Reactome"/>
</dbReference>
<dbReference type="GO" id="GO:0071159">
    <property type="term" value="C:NF-kappaB complex"/>
    <property type="evidence" value="ECO:0000303"/>
    <property type="project" value="ComplexPortal"/>
</dbReference>
<dbReference type="GO" id="GO:0005654">
    <property type="term" value="C:nucleoplasm"/>
    <property type="evidence" value="ECO:0000304"/>
    <property type="project" value="Reactome"/>
</dbReference>
<dbReference type="GO" id="GO:0005634">
    <property type="term" value="C:nucleus"/>
    <property type="evidence" value="ECO:0000315"/>
    <property type="project" value="CACAO"/>
</dbReference>
<dbReference type="GO" id="GO:0001228">
    <property type="term" value="F:DNA-binding transcription activator activity, RNA polymerase II-specific"/>
    <property type="evidence" value="ECO:0000314"/>
    <property type="project" value="NTNU_SB"/>
</dbReference>
<dbReference type="GO" id="GO:0003700">
    <property type="term" value="F:DNA-binding transcription factor activity"/>
    <property type="evidence" value="ECO:0000303"/>
    <property type="project" value="ProtInc"/>
</dbReference>
<dbReference type="GO" id="GO:0000981">
    <property type="term" value="F:DNA-binding transcription factor activity, RNA polymerase II-specific"/>
    <property type="evidence" value="ECO:0000247"/>
    <property type="project" value="NTNU_SB"/>
</dbReference>
<dbReference type="GO" id="GO:0000978">
    <property type="term" value="F:RNA polymerase II cis-regulatory region sequence-specific DNA binding"/>
    <property type="evidence" value="ECO:0000314"/>
    <property type="project" value="NTNU_SB"/>
</dbReference>
<dbReference type="GO" id="GO:0007249">
    <property type="term" value="P:canonical NF-kappaB signal transduction"/>
    <property type="evidence" value="ECO:0000318"/>
    <property type="project" value="GO_Central"/>
</dbReference>
<dbReference type="GO" id="GO:0006954">
    <property type="term" value="P:inflammatory response"/>
    <property type="evidence" value="ECO:0000318"/>
    <property type="project" value="GO_Central"/>
</dbReference>
<dbReference type="GO" id="GO:0045087">
    <property type="term" value="P:innate immune response"/>
    <property type="evidence" value="ECO:0000318"/>
    <property type="project" value="GO_Central"/>
</dbReference>
<dbReference type="GO" id="GO:0010629">
    <property type="term" value="P:negative regulation of gene expression"/>
    <property type="evidence" value="ECO:0000314"/>
    <property type="project" value="CACAO"/>
</dbReference>
<dbReference type="GO" id="GO:0032688">
    <property type="term" value="P:negative regulation of interferon-beta production"/>
    <property type="evidence" value="ECO:0000314"/>
    <property type="project" value="CACAO"/>
</dbReference>
<dbReference type="GO" id="GO:0038061">
    <property type="term" value="P:non-canonical NF-kappaB signal transduction"/>
    <property type="evidence" value="ECO:0000318"/>
    <property type="project" value="GO_Central"/>
</dbReference>
<dbReference type="GO" id="GO:0043123">
    <property type="term" value="P:positive regulation of canonical NF-kappaB signal transduction"/>
    <property type="evidence" value="ECO:0000270"/>
    <property type="project" value="UniProtKB"/>
</dbReference>
<dbReference type="GO" id="GO:0045944">
    <property type="term" value="P:positive regulation of transcription by RNA polymerase II"/>
    <property type="evidence" value="ECO:0000314"/>
    <property type="project" value="NTNU_SB"/>
</dbReference>
<dbReference type="GO" id="GO:0034097">
    <property type="term" value="P:response to cytokine"/>
    <property type="evidence" value="ECO:0000318"/>
    <property type="project" value="GO_Central"/>
</dbReference>
<dbReference type="CDD" id="cd01177">
    <property type="entry name" value="IPT_NFkappaB"/>
    <property type="match status" value="1"/>
</dbReference>
<dbReference type="CDD" id="cd07933">
    <property type="entry name" value="RHD-n_c-Rel"/>
    <property type="match status" value="1"/>
</dbReference>
<dbReference type="FunFam" id="2.60.40.340:FF:000003">
    <property type="entry name" value="NFkB p65 transcription factor"/>
    <property type="match status" value="1"/>
</dbReference>
<dbReference type="FunFam" id="2.60.40.10:FF:000046">
    <property type="entry name" value="Nuclear factor NF-kappa-B p105 subunit"/>
    <property type="match status" value="1"/>
</dbReference>
<dbReference type="Gene3D" id="2.60.40.10">
    <property type="entry name" value="Immunoglobulins"/>
    <property type="match status" value="1"/>
</dbReference>
<dbReference type="Gene3D" id="2.60.40.340">
    <property type="entry name" value="Rel homology domain (RHD), DNA-binding domain"/>
    <property type="match status" value="1"/>
</dbReference>
<dbReference type="InterPro" id="IPR013783">
    <property type="entry name" value="Ig-like_fold"/>
</dbReference>
<dbReference type="InterPro" id="IPR014756">
    <property type="entry name" value="Ig_E-set"/>
</dbReference>
<dbReference type="InterPro" id="IPR002909">
    <property type="entry name" value="IPT_dom"/>
</dbReference>
<dbReference type="InterPro" id="IPR033926">
    <property type="entry name" value="IPT_NFkappaB"/>
</dbReference>
<dbReference type="InterPro" id="IPR000451">
    <property type="entry name" value="NFkB/Dor"/>
</dbReference>
<dbReference type="InterPro" id="IPR008967">
    <property type="entry name" value="p53-like_TF_DNA-bd_sf"/>
</dbReference>
<dbReference type="InterPro" id="IPR042845">
    <property type="entry name" value="RHD-n_c-Rel"/>
</dbReference>
<dbReference type="InterPro" id="IPR030492">
    <property type="entry name" value="RHD_CS"/>
</dbReference>
<dbReference type="InterPro" id="IPR032397">
    <property type="entry name" value="RHD_dimer"/>
</dbReference>
<dbReference type="InterPro" id="IPR011539">
    <property type="entry name" value="RHD_DNA_bind_dom"/>
</dbReference>
<dbReference type="InterPro" id="IPR037059">
    <property type="entry name" value="RHD_DNA_bind_dom_sf"/>
</dbReference>
<dbReference type="PANTHER" id="PTHR24169">
    <property type="entry name" value="NUCLEAR FACTOR NF-KAPPA-B PROTEIN"/>
    <property type="match status" value="1"/>
</dbReference>
<dbReference type="PANTHER" id="PTHR24169:SF4">
    <property type="entry name" value="PROTO-ONCOGENE C-REL"/>
    <property type="match status" value="1"/>
</dbReference>
<dbReference type="Pfam" id="PF16179">
    <property type="entry name" value="RHD_dimer"/>
    <property type="match status" value="1"/>
</dbReference>
<dbReference type="Pfam" id="PF00554">
    <property type="entry name" value="RHD_DNA_bind"/>
    <property type="match status" value="1"/>
</dbReference>
<dbReference type="PRINTS" id="PR02045">
    <property type="entry name" value="F138DOMAIN"/>
</dbReference>
<dbReference type="PRINTS" id="PR00057">
    <property type="entry name" value="NFKBTNSCPFCT"/>
</dbReference>
<dbReference type="SMART" id="SM00429">
    <property type="entry name" value="IPT"/>
    <property type="match status" value="1"/>
</dbReference>
<dbReference type="SUPFAM" id="SSF81296">
    <property type="entry name" value="E set domains"/>
    <property type="match status" value="1"/>
</dbReference>
<dbReference type="SUPFAM" id="SSF49417">
    <property type="entry name" value="p53-like transcription factors"/>
    <property type="match status" value="1"/>
</dbReference>
<dbReference type="PROSITE" id="PS01204">
    <property type="entry name" value="REL_1"/>
    <property type="match status" value="1"/>
</dbReference>
<dbReference type="PROSITE" id="PS50254">
    <property type="entry name" value="REL_2"/>
    <property type="match status" value="1"/>
</dbReference>
<organism>
    <name type="scientific">Homo sapiens</name>
    <name type="common">Human</name>
    <dbReference type="NCBI Taxonomy" id="9606"/>
    <lineage>
        <taxon>Eukaryota</taxon>
        <taxon>Metazoa</taxon>
        <taxon>Chordata</taxon>
        <taxon>Craniata</taxon>
        <taxon>Vertebrata</taxon>
        <taxon>Euteleostomi</taxon>
        <taxon>Mammalia</taxon>
        <taxon>Eutheria</taxon>
        <taxon>Euarchontoglires</taxon>
        <taxon>Primates</taxon>
        <taxon>Haplorrhini</taxon>
        <taxon>Catarrhini</taxon>
        <taxon>Hominidae</taxon>
        <taxon>Homo</taxon>
    </lineage>
</organism>